<comment type="function">
    <text evidence="1 5">Binds to CDK2-bound cyclins and inhibits the kinase activity of CDK2; binding to cyclins is critical for its function as CDK inhibitor (PubMed:21540187). Inhibits cell growth and cell proliferation and may play a role in cell cycle control (By similarity). Required for ING5-mediated regulation of S-phase progression, enhancement of Fas-induced apoptosis and inhibition of cell growth (By similarity).</text>
</comment>
<comment type="subunit">
    <text evidence="3 4 5 6 7">Interacts with CCNA1 (PubMed:15159402, PubMed:21540187). Interacts with CCNA2, CCNB1 and CCNE1 (PubMed:21540187). Found in a complex with CCNA1 and CDK2 (PubMed:15159402). Interacts with ZNF16; the interaction inhibits INCA1 activity and induces the cell cycle process (PubMed:21874239). Interacts with SPACA9 (PubMed:18756329). Interacts with the CCNA1/CDK2 complex (PubMed:21540187). Interacts with ING5, DAZAP2, RNF26, USP15, SPOUT1, DPH7, TRIM26 and RAB5C (PubMed:21750715).</text>
</comment>
<comment type="interaction">
    <interactant intactId="EBI-6509505">
        <id>Q0VD86</id>
    </interactant>
    <interactant intactId="EBI-11096309">
        <id>Q9NYB9-2</id>
        <label>ABI2</label>
    </interactant>
    <organismsDiffer>false</organismsDiffer>
    <experiments>3</experiments>
</comment>
<comment type="interaction">
    <interactant intactId="EBI-6509505">
        <id>Q0VD86</id>
    </interactant>
    <interactant intactId="EBI-367510">
        <id>P68133</id>
        <label>ACTA1</label>
    </interactant>
    <organismsDiffer>false</organismsDiffer>
    <experiments>3</experiments>
</comment>
<comment type="interaction">
    <interactant intactId="EBI-6509505">
        <id>Q0VD86</id>
    </interactant>
    <interactant intactId="EBI-11976299">
        <id>Q5BKX5-3</id>
        <label>ACTMAP</label>
    </interactant>
    <organismsDiffer>false</organismsDiffer>
    <experiments>3</experiments>
</comment>
<comment type="interaction">
    <interactant intactId="EBI-6509505">
        <id>Q0VD86</id>
    </interactant>
    <interactant intactId="EBI-3916242">
        <id>Q96HD9</id>
        <label>ACY3</label>
    </interactant>
    <organismsDiffer>false</organismsDiffer>
    <experiments>5</experiments>
</comment>
<comment type="interaction">
    <interactant intactId="EBI-6509505">
        <id>Q0VD86</id>
    </interactant>
    <interactant intactId="EBI-357530">
        <id>Q9ULX6</id>
        <label>AKAP8L</label>
    </interactant>
    <organismsDiffer>false</organismsDiffer>
    <experiments>3</experiments>
</comment>
<comment type="interaction">
    <interactant intactId="EBI-6509505">
        <id>Q0VD86</id>
    </interactant>
    <interactant intactId="EBI-359567">
        <id>O15084</id>
        <label>ANKRD28</label>
    </interactant>
    <organismsDiffer>false</organismsDiffer>
    <experiments>3</experiments>
</comment>
<comment type="interaction">
    <interactant intactId="EBI-6509505">
        <id>Q0VD86</id>
    </interactant>
    <interactant intactId="EBI-742909">
        <id>Q9H6L4</id>
        <label>ARMC7</label>
    </interactant>
    <organismsDiffer>false</organismsDiffer>
    <experiments>3</experiments>
</comment>
<comment type="interaction">
    <interactant intactId="EBI-6509505">
        <id>Q0VD86</id>
    </interactant>
    <interactant intactId="EBI-1993677">
        <id>Q9BZE9</id>
        <label>ASPSCR1</label>
    </interactant>
    <organismsDiffer>false</organismsDiffer>
    <experiments>3</experiments>
</comment>
<comment type="interaction">
    <interactant intactId="EBI-6509505">
        <id>Q0VD86</id>
    </interactant>
    <interactant intactId="EBI-1047414">
        <id>Q9H1Y0</id>
        <label>ATG5</label>
    </interactant>
    <organismsDiffer>false</organismsDiffer>
    <experiments>3</experiments>
</comment>
<comment type="interaction">
    <interactant intactId="EBI-6509505">
        <id>Q0VD86</id>
    </interactant>
    <interactant intactId="EBI-11954292">
        <id>Q86V38</id>
        <label>ATN1</label>
    </interactant>
    <organismsDiffer>false</organismsDiffer>
    <experiments>3</experiments>
</comment>
<comment type="interaction">
    <interactant intactId="EBI-6509505">
        <id>Q0VD86</id>
    </interactant>
    <interactant intactId="EBI-948169">
        <id>P13637</id>
        <label>ATP1A3</label>
    </interactant>
    <organismsDiffer>false</organismsDiffer>
    <experiments>3</experiments>
</comment>
<comment type="interaction">
    <interactant intactId="EBI-6509505">
        <id>Q0VD86</id>
    </interactant>
    <interactant intactId="EBI-3923949">
        <id>Q8N8Y2</id>
        <label>ATP6V0D2</label>
    </interactant>
    <organismsDiffer>false</organismsDiffer>
    <experiments>3</experiments>
</comment>
<comment type="interaction">
    <interactant intactId="EBI-6509505">
        <id>Q0VD86</id>
    </interactant>
    <interactant intactId="EBI-1166928">
        <id>Q8N5M1</id>
        <label>ATPAF2</label>
    </interactant>
    <organismsDiffer>false</organismsDiffer>
    <experiments>3</experiments>
</comment>
<comment type="interaction">
    <interactant intactId="EBI-6509505">
        <id>Q0VD86</id>
    </interactant>
    <interactant intactId="EBI-747185">
        <id>O95817</id>
        <label>BAG3</label>
    </interactant>
    <organismsDiffer>false</organismsDiffer>
    <experiments>3</experiments>
</comment>
<comment type="interaction">
    <interactant intactId="EBI-6509505">
        <id>Q0VD86</id>
    </interactant>
    <interactant intactId="EBI-11977289">
        <id>Q9H503-2</id>
        <label>BANF2</label>
    </interactant>
    <organismsDiffer>false</organismsDiffer>
    <experiments>3</experiments>
</comment>
<comment type="interaction">
    <interactant intactId="EBI-6509505">
        <id>Q0VD86</id>
    </interactant>
    <interactant intactId="EBI-12086950">
        <id>Q53S33</id>
        <label>BOLA3</label>
    </interactant>
    <organismsDiffer>false</organismsDiffer>
    <experiments>3</experiments>
</comment>
<comment type="interaction">
    <interactant intactId="EBI-6509505">
        <id>Q0VD86</id>
    </interactant>
    <interactant intactId="EBI-953896">
        <id>Q9NP55</id>
        <label>BPIFA1</label>
    </interactant>
    <organismsDiffer>false</organismsDiffer>
    <experiments>3</experiments>
</comment>
<comment type="interaction">
    <interactant intactId="EBI-6509505">
        <id>Q0VD86</id>
    </interactant>
    <interactant intactId="EBI-12809220">
        <id>Q5SWW7</id>
        <label>C10orf55</label>
    </interactant>
    <organismsDiffer>false</organismsDiffer>
    <experiments>3</experiments>
</comment>
<comment type="interaction">
    <interactant intactId="EBI-6509505">
        <id>Q0VD86</id>
    </interactant>
    <interactant intactId="EBI-2874661">
        <id>Q9BV19</id>
        <label>C1orf50</label>
    </interactant>
    <organismsDiffer>false</organismsDiffer>
    <experiments>3</experiments>
</comment>
<comment type="interaction">
    <interactant intactId="EBI-6509505">
        <id>Q0VD86</id>
    </interactant>
    <interactant intactId="EBI-7317823">
        <id>Q6P5X5</id>
        <label>C22orf39</label>
    </interactant>
    <organismsDiffer>false</organismsDiffer>
    <experiments>3</experiments>
</comment>
<comment type="interaction">
    <interactant intactId="EBI-6509505">
        <id>Q0VD86</id>
    </interactant>
    <interactant intactId="EBI-10311131">
        <id>Q9NP86</id>
        <label>CABP5</label>
    </interactant>
    <organismsDiffer>false</organismsDiffer>
    <experiments>10</experiments>
</comment>
<comment type="interaction">
    <interactant intactId="EBI-6509505">
        <id>Q0VD86</id>
    </interactant>
    <interactant intactId="EBI-12013534">
        <id>Q6UXH8-3</id>
        <label>CCBE1</label>
    </interactant>
    <organismsDiffer>false</organismsDiffer>
    <experiments>3</experiments>
</comment>
<comment type="interaction">
    <interactant intactId="EBI-6509505">
        <id>Q0VD86</id>
    </interactant>
    <interactant intactId="EBI-10961624">
        <id>Q2TAC2-2</id>
        <label>CCDC57</label>
    </interactant>
    <organismsDiffer>false</organismsDiffer>
    <experiments>3</experiments>
</comment>
<comment type="interaction">
    <interactant intactId="EBI-6509505">
        <id>Q0VD86</id>
    </interactant>
    <interactant intactId="EBI-18205352">
        <id>A2IDD5-4</id>
        <label>CCDC78</label>
    </interactant>
    <organismsDiffer>false</organismsDiffer>
    <experiments>3</experiments>
</comment>
<comment type="interaction">
    <interactant intactId="EBI-6509505">
        <id>Q0VD86</id>
    </interactant>
    <interactant intactId="EBI-9250559">
        <id>P32320</id>
        <label>CDA</label>
    </interactant>
    <organismsDiffer>false</organismsDiffer>
    <experiments>3</experiments>
</comment>
<comment type="interaction">
    <interactant intactId="EBI-6509505">
        <id>Q0VD86</id>
    </interactant>
    <interactant intactId="EBI-396137">
        <id>Q9UJX2</id>
        <label>CDC23</label>
    </interactant>
    <organismsDiffer>false</organismsDiffer>
    <experiments>3</experiments>
</comment>
<comment type="interaction">
    <interactant intactId="EBI-6509505">
        <id>Q0VD86</id>
    </interactant>
    <interactant intactId="EBI-746238">
        <id>Q07002</id>
        <label>CDK18</label>
    </interactant>
    <organismsDiffer>false</organismsDiffer>
    <experiments>3</experiments>
</comment>
<comment type="interaction">
    <interactant intactId="EBI-6509505">
        <id>Q0VD86</id>
    </interactant>
    <interactant intactId="EBI-295644">
        <id>P11802</id>
        <label>CDK4</label>
    </interactant>
    <organismsDiffer>false</organismsDiffer>
    <experiments>3</experiments>
</comment>
<comment type="interaction">
    <interactant intactId="EBI-6509505">
        <id>Q0VD86</id>
    </interactant>
    <interactant intactId="EBI-375077">
        <id>P38936</id>
        <label>CDKN1A</label>
    </interactant>
    <organismsDiffer>false</organismsDiffer>
    <experiments>3</experiments>
</comment>
<comment type="interaction">
    <interactant intactId="EBI-6509505">
        <id>Q0VD86</id>
    </interactant>
    <interactant intactId="EBI-711280">
        <id>P42772</id>
        <label>CDKN2B</label>
    </interactant>
    <organismsDiffer>false</organismsDiffer>
    <experiments>3</experiments>
</comment>
<comment type="interaction">
    <interactant intactId="EBI-6509505">
        <id>Q0VD86</id>
    </interactant>
    <interactant intactId="EBI-745859">
        <id>P55273</id>
        <label>CDKN2D</label>
    </interactant>
    <organismsDiffer>false</organismsDiffer>
    <experiments>9</experiments>
</comment>
<comment type="interaction">
    <interactant intactId="EBI-6509505">
        <id>Q0VD86</id>
    </interactant>
    <interactant intactId="EBI-739498">
        <id>Q9P209</id>
        <label>CEP72</label>
    </interactant>
    <organismsDiffer>false</organismsDiffer>
    <experiments>3</experiments>
</comment>
<comment type="interaction">
    <interactant intactId="EBI-6509505">
        <id>Q0VD86</id>
    </interactant>
    <interactant intactId="EBI-2321769">
        <id>Q9Y6H1</id>
        <label>CHCHD2</label>
    </interactant>
    <organismsDiffer>false</organismsDiffer>
    <experiments>3</experiments>
</comment>
<comment type="interaction">
    <interactant intactId="EBI-6509505">
        <id>Q0VD86</id>
    </interactant>
    <interactant intactId="EBI-11521409">
        <id>Q9BSY4</id>
        <label>CHCHD5</label>
    </interactant>
    <organismsDiffer>false</organismsDiffer>
    <experiments>3</experiments>
</comment>
<comment type="interaction">
    <interactant intactId="EBI-6509505">
        <id>Q0VD86</id>
    </interactant>
    <interactant intactId="EBI-947551">
        <id>Q9H2X0</id>
        <label>CHRD</label>
    </interactant>
    <organismsDiffer>false</organismsDiffer>
    <experiments>3</experiments>
</comment>
<comment type="interaction">
    <interactant intactId="EBI-6509505">
        <id>Q0VD86</id>
    </interactant>
    <interactant intactId="EBI-739784">
        <id>Q9BW66</id>
        <label>CINP</label>
    </interactant>
    <organismsDiffer>false</organismsDiffer>
    <experiments>3</experiments>
</comment>
<comment type="interaction">
    <interactant intactId="EBI-6509505">
        <id>Q0VD86</id>
    </interactant>
    <interactant intactId="EBI-456371">
        <id>P61024</id>
        <label>CKS1B</label>
    </interactant>
    <organismsDiffer>false</organismsDiffer>
    <experiments>3</experiments>
</comment>
<comment type="interaction">
    <interactant intactId="EBI-6509505">
        <id>Q0VD86</id>
    </interactant>
    <interactant intactId="EBI-10192241">
        <id>O95833</id>
        <label>CLIC3</label>
    </interactant>
    <organismsDiffer>false</organismsDiffer>
    <experiments>3</experiments>
</comment>
<comment type="interaction">
    <interactant intactId="EBI-6509505">
        <id>Q0VD86</id>
    </interactant>
    <interactant intactId="EBI-745579">
        <id>P49761</id>
        <label>CLK3</label>
    </interactant>
    <organismsDiffer>false</organismsDiffer>
    <experiments>3</experiments>
</comment>
<comment type="interaction">
    <interactant intactId="EBI-6509505">
        <id>Q0VD86</id>
    </interactant>
    <interactant intactId="EBI-21553822">
        <id>Q96A83-2</id>
        <label>COL26A1</label>
    </interactant>
    <organismsDiffer>false</organismsDiffer>
    <experiments>3</experiments>
</comment>
<comment type="interaction">
    <interactant intactId="EBI-6509505">
        <id>Q0VD86</id>
    </interactant>
    <interactant intactId="EBI-747133">
        <id>P27658</id>
        <label>COL8A1</label>
    </interactant>
    <organismsDiffer>false</organismsDiffer>
    <experiments>9</experiments>
</comment>
<comment type="interaction">
    <interactant intactId="EBI-6509505">
        <id>Q0VD86</id>
    </interactant>
    <interactant intactId="EBI-347859">
        <id>Q10570</id>
        <label>CPSF1</label>
    </interactant>
    <organismsDiffer>false</organismsDiffer>
    <experiments>3</experiments>
</comment>
<comment type="interaction">
    <interactant intactId="EBI-6509505">
        <id>Q0VD86</id>
    </interactant>
    <interactant intactId="EBI-6875961">
        <id>P02489</id>
        <label>CRYAA</label>
    </interactant>
    <organismsDiffer>false</organismsDiffer>
    <experiments>3</experiments>
</comment>
<comment type="interaction">
    <interactant intactId="EBI-6509505">
        <id>Q0VD86</id>
    </interactant>
    <interactant intactId="EBI-1763657">
        <id>Q9Y534</id>
        <label>CSDC2</label>
    </interactant>
    <organismsDiffer>false</organismsDiffer>
    <experiments>3</experiments>
</comment>
<comment type="interaction">
    <interactant intactId="EBI-6509505">
        <id>Q0VD86</id>
    </interactant>
    <interactant intactId="EBI-711360">
        <id>P33240</id>
        <label>CSTF2</label>
    </interactant>
    <organismsDiffer>false</organismsDiffer>
    <experiments>3</experiments>
</comment>
<comment type="interaction">
    <interactant intactId="EBI-6509505">
        <id>Q0VD86</id>
    </interactant>
    <interactant intactId="EBI-747082">
        <id>Q9NSA3</id>
        <label>CTNNBIP1</label>
    </interactant>
    <organismsDiffer>false</organismsDiffer>
    <experiments>3</experiments>
</comment>
<comment type="interaction">
    <interactant intactId="EBI-6509505">
        <id>Q0VD86</id>
    </interactant>
    <interactant intactId="EBI-1774260">
        <id>Q8WZ74</id>
        <label>CTTNBP2</label>
    </interactant>
    <organismsDiffer>false</organismsDiffer>
    <experiments>3</experiments>
</comment>
<comment type="interaction">
    <interactant intactId="EBI-6509505">
        <id>Q0VD86</id>
    </interactant>
    <interactant intactId="EBI-3867333">
        <id>A8MQ03</id>
        <label>CYSRT1</label>
    </interactant>
    <organismsDiffer>false</organismsDiffer>
    <experiments>3</experiments>
</comment>
<comment type="interaction">
    <interactant intactId="EBI-6509505">
        <id>Q0VD86</id>
    </interactant>
    <interactant intactId="EBI-724310">
        <id>Q15038</id>
        <label>DAZAP2</label>
    </interactant>
    <organismsDiffer>false</organismsDiffer>
    <experiments>2</experiments>
</comment>
<comment type="interaction">
    <interactant intactId="EBI-6509505">
        <id>Q0VD86</id>
    </interactant>
    <interactant intactId="EBI-745369">
        <id>Q9H4E7</id>
        <label>DEF6</label>
    </interactant>
    <organismsDiffer>false</organismsDiffer>
    <experiments>3</experiments>
</comment>
<comment type="interaction">
    <interactant intactId="EBI-6509505">
        <id>Q0VD86</id>
    </interactant>
    <interactant intactId="EBI-9679045">
        <id>Q9NQL9</id>
        <label>DMRT3</label>
    </interactant>
    <organismsDiffer>false</organismsDiffer>
    <experiments>6</experiments>
</comment>
<comment type="interaction">
    <interactant intactId="EBI-6509505">
        <id>Q0VD86</id>
    </interactant>
    <interactant intactId="EBI-954466">
        <id>Q96MA1</id>
        <label>DMRTB1</label>
    </interactant>
    <organismsDiffer>false</organismsDiffer>
    <experiments>3</experiments>
</comment>
<comment type="interaction">
    <interactant intactId="EBI-6509505">
        <id>Q0VD86</id>
    </interactant>
    <interactant intactId="EBI-6918542">
        <id>Q8TEW6</id>
        <label>DOK4</label>
    </interactant>
    <organismsDiffer>false</organismsDiffer>
    <experiments>3</experiments>
</comment>
<comment type="interaction">
    <interactant intactId="EBI-6509505">
        <id>Q0VD86</id>
    </interactant>
    <interactant intactId="EBI-11059920">
        <id>Q9BTV6</id>
        <label>DPH7</label>
    </interactant>
    <organismsDiffer>false</organismsDiffer>
    <experiments>2</experiments>
</comment>
<comment type="interaction">
    <interactant intactId="EBI-6509505">
        <id>Q0VD86</id>
    </interactant>
    <interactant intactId="EBI-749800">
        <id>Q9UII6</id>
        <label>DUSP13B</label>
    </interactant>
    <organismsDiffer>false</organismsDiffer>
    <experiments>3</experiments>
</comment>
<comment type="interaction">
    <interactant intactId="EBI-6509505">
        <id>Q0VD86</id>
    </interactant>
    <interactant intactId="EBI-743414">
        <id>O95967</id>
        <label>EFEMP2</label>
    </interactant>
    <organismsDiffer>false</organismsDiffer>
    <experiments>3</experiments>
</comment>
<comment type="interaction">
    <interactant intactId="EBI-6509505">
        <id>Q0VD86</id>
    </interactant>
    <interactant intactId="EBI-1054228">
        <id>P41091</id>
        <label>EIF2S3</label>
    </interactant>
    <organismsDiffer>false</organismsDiffer>
    <experiments>3</experiments>
</comment>
<comment type="interaction">
    <interactant intactId="EBI-6509505">
        <id>Q0VD86</id>
    </interactant>
    <interactant intactId="EBI-489887">
        <id>P50402</id>
        <label>EMD</label>
    </interactant>
    <organismsDiffer>false</organismsDiffer>
    <experiments>3</experiments>
</comment>
<comment type="interaction">
    <interactant intactId="EBI-6509505">
        <id>Q0VD86</id>
    </interactant>
    <interactant intactId="EBI-10182490">
        <id>O15197-2</id>
        <label>EPHB6</label>
    </interactant>
    <organismsDiffer>false</organismsDiffer>
    <experiments>8</experiments>
</comment>
<comment type="interaction">
    <interactant intactId="EBI-6509505">
        <id>Q0VD86</id>
    </interactant>
    <interactant intactId="EBI-25852368">
        <id>O75460-2</id>
        <label>ERN1</label>
    </interactant>
    <organismsDiffer>false</organismsDiffer>
    <experiments>3</experiments>
</comment>
<comment type="interaction">
    <interactant intactId="EBI-6509505">
        <id>Q0VD86</id>
    </interactant>
    <interactant intactId="EBI-371922">
        <id>Q96B26</id>
        <label>EXOSC8</label>
    </interactant>
    <organismsDiffer>false</organismsDiffer>
    <experiments>3</experiments>
</comment>
<comment type="interaction">
    <interactant intactId="EBI-6509505">
        <id>Q0VD86</id>
    </interactant>
    <interactant intactId="EBI-12013806">
        <id>Q6NZ36-4</id>
        <label>FAAP20</label>
    </interactant>
    <organismsDiffer>false</organismsDiffer>
    <experiments>3</experiments>
</comment>
<comment type="interaction">
    <interactant intactId="EBI-6509505">
        <id>Q0VD86</id>
    </interactant>
    <interactant intactId="EBI-12039347">
        <id>Q9NVQ4-2</id>
        <label>FAIM</label>
    </interactant>
    <organismsDiffer>false</organismsDiffer>
    <experiments>3</experiments>
</comment>
<comment type="interaction">
    <interactant intactId="EBI-6509505">
        <id>Q0VD86</id>
    </interactant>
    <interactant intactId="EBI-2515349">
        <id>Q9BSK4</id>
        <label>FEM1A</label>
    </interactant>
    <organismsDiffer>false</organismsDiffer>
    <experiments>3</experiments>
</comment>
<comment type="interaction">
    <interactant intactId="EBI-6509505">
        <id>Q0VD86</id>
    </interactant>
    <interactant intactId="EBI-11479104">
        <id>O43320</id>
        <label>FGF16</label>
    </interactant>
    <organismsDiffer>false</organismsDiffer>
    <experiments>3</experiments>
</comment>
<comment type="interaction">
    <interactant intactId="EBI-6509505">
        <id>Q0VD86</id>
    </interactant>
    <interactant intactId="EBI-701903">
        <id>Q14192</id>
        <label>FHL2</label>
    </interactant>
    <organismsDiffer>false</organismsDiffer>
    <experiments>5</experiments>
</comment>
<comment type="interaction">
    <interactant intactId="EBI-6509505">
        <id>Q0VD86</id>
    </interactant>
    <interactant intactId="EBI-10226858">
        <id>Q0VDC6</id>
        <label>FKBP1A</label>
    </interactant>
    <organismsDiffer>false</organismsDiffer>
    <experiments>3</experiments>
</comment>
<comment type="interaction">
    <interactant intactId="EBI-6509505">
        <id>Q0VD86</id>
    </interactant>
    <interactant intactId="EBI-725515">
        <id>O43559</id>
        <label>FRS3</label>
    </interactant>
    <organismsDiffer>false</organismsDiffer>
    <experiments>3</experiments>
</comment>
<comment type="interaction">
    <interactant intactId="EBI-6509505">
        <id>Q0VD86</id>
    </interactant>
    <interactant intactId="EBI-744104">
        <id>P55040</id>
        <label>GEM</label>
    </interactant>
    <organismsDiffer>false</organismsDiffer>
    <experiments>3</experiments>
</comment>
<comment type="interaction">
    <interactant intactId="EBI-6509505">
        <id>Q0VD86</id>
    </interactant>
    <interactant intactId="EBI-443648">
        <id>O14893</id>
        <label>GEMIN2</label>
    </interactant>
    <organismsDiffer>false</organismsDiffer>
    <experiments>3</experiments>
</comment>
<comment type="interaction">
    <interactant intactId="EBI-6509505">
        <id>Q0VD86</id>
    </interactant>
    <interactant intactId="EBI-401755">
        <id>P62993</id>
        <label>GRB2</label>
    </interactant>
    <organismsDiffer>false</organismsDiffer>
    <experiments>4</experiments>
</comment>
<comment type="interaction">
    <interactant intactId="EBI-6509505">
        <id>Q0VD86</id>
    </interactant>
    <interactant intactId="EBI-5235612">
        <id>A8MXD5</id>
        <label>GRXCR1</label>
    </interactant>
    <organismsDiffer>false</organismsDiffer>
    <experiments>3</experiments>
</comment>
<comment type="interaction">
    <interactant intactId="EBI-6509505">
        <id>Q0VD86</id>
    </interactant>
    <interactant intactId="EBI-10194609">
        <id>Q9H4Y5</id>
        <label>GSTO2</label>
    </interactant>
    <organismsDiffer>false</organismsDiffer>
    <experiments>3</experiments>
</comment>
<comment type="interaction">
    <interactant intactId="EBI-6509505">
        <id>Q0VD86</id>
    </interactant>
    <interactant intactId="EBI-6380438">
        <id>Q6ZYL4</id>
        <label>GTF2H5</label>
    </interactant>
    <organismsDiffer>false</organismsDiffer>
    <experiments>3</experiments>
</comment>
<comment type="interaction">
    <interactant intactId="EBI-6509505">
        <id>Q0VD86</id>
    </interactant>
    <interactant intactId="EBI-740290">
        <id>Q969Y2</id>
        <label>GTPBP3</label>
    </interactant>
    <organismsDiffer>false</organismsDiffer>
    <experiments>3</experiments>
</comment>
<comment type="interaction">
    <interactant intactId="EBI-6509505">
        <id>Q0VD86</id>
    </interactant>
    <interactant intactId="EBI-740553">
        <id>P13807</id>
        <label>GYS1</label>
    </interactant>
    <organismsDiffer>false</organismsDiffer>
    <experiments>3</experiments>
</comment>
<comment type="interaction">
    <interactant intactId="EBI-6509505">
        <id>Q0VD86</id>
    </interactant>
    <interactant intactId="EBI-2514791">
        <id>Q96CS2</id>
        <label>HAUS1</label>
    </interactant>
    <organismsDiffer>false</organismsDiffer>
    <experiments>3</experiments>
</comment>
<comment type="interaction">
    <interactant intactId="EBI-6509505">
        <id>Q0VD86</id>
    </interactant>
    <interactant intactId="EBI-9834454">
        <id>P08631-2</id>
        <label>HCK</label>
    </interactant>
    <organismsDiffer>false</organismsDiffer>
    <experiments>3</experiments>
</comment>
<comment type="interaction">
    <interactant intactId="EBI-6509505">
        <id>Q0VD86</id>
    </interactant>
    <interactant intactId="EBI-11953488">
        <id>P56524-2</id>
        <label>HDAC4</label>
    </interactant>
    <organismsDiffer>false</organismsDiffer>
    <experiments>3</experiments>
</comment>
<comment type="interaction">
    <interactant intactId="EBI-6509505">
        <id>Q0VD86</id>
    </interactant>
    <interactant intactId="EBI-10329202">
        <id>Q9Y5R4</id>
        <label>HEMK1</label>
    </interactant>
    <organismsDiffer>false</organismsDiffer>
    <experiments>5</experiments>
</comment>
<comment type="interaction">
    <interactant intactId="EBI-6509505">
        <id>Q0VD86</id>
    </interactant>
    <interactant intactId="EBI-9675710">
        <id>Q5T8I9</id>
        <label>HENMT1</label>
    </interactant>
    <organismsDiffer>false</organismsDiffer>
    <experiments>3</experiments>
</comment>
<comment type="interaction">
    <interactant intactId="EBI-6509505">
        <id>Q0VD86</id>
    </interactant>
    <interactant intactId="EBI-352986">
        <id>P52597</id>
        <label>HNRNPF</label>
    </interactant>
    <organismsDiffer>false</organismsDiffer>
    <experiments>3</experiments>
</comment>
<comment type="interaction">
    <interactant intactId="EBI-6509505">
        <id>Q0VD86</id>
    </interactant>
    <interactant intactId="EBI-748420">
        <id>Q9NSC5</id>
        <label>HOMER3</label>
    </interactant>
    <organismsDiffer>false</organismsDiffer>
    <experiments>3</experiments>
</comment>
<comment type="interaction">
    <interactant intactId="EBI-6509505">
        <id>Q0VD86</id>
    </interactant>
    <interactant intactId="EBI-740785">
        <id>P49639</id>
        <label>HOXA1</label>
    </interactant>
    <organismsDiffer>false</organismsDiffer>
    <experiments>3</experiments>
</comment>
<comment type="interaction">
    <interactant intactId="EBI-6509505">
        <id>Q0VD86</id>
    </interactant>
    <interactant intactId="EBI-2880706">
        <id>O43593</id>
        <label>HR</label>
    </interactant>
    <organismsDiffer>false</organismsDiffer>
    <experiments>3</experiments>
</comment>
<comment type="interaction">
    <interactant intactId="EBI-6509505">
        <id>Q0VD86</id>
    </interactant>
    <interactant intactId="EBI-742664">
        <id>Q9BPX1</id>
        <label>HSD17B14</label>
    </interactant>
    <organismsDiffer>false</organismsDiffer>
    <experiments>3</experiments>
</comment>
<comment type="interaction">
    <interactant intactId="EBI-6509505">
        <id>Q0VD86</id>
    </interactant>
    <interactant intactId="EBI-356991">
        <id>P54652</id>
        <label>HSPA2</label>
    </interactant>
    <organismsDiffer>false</organismsDiffer>
    <experiments>3</experiments>
</comment>
<comment type="interaction">
    <interactant intactId="EBI-6509505">
        <id>Q0VD86</id>
    </interactant>
    <interactant intactId="EBI-352528">
        <id>P10809</id>
        <label>HSPD1</label>
    </interactant>
    <organismsDiffer>false</organismsDiffer>
    <experiments>3</experiments>
</comment>
<comment type="interaction">
    <interactant intactId="EBI-6509505">
        <id>Q0VD86</id>
    </interactant>
    <interactant intactId="EBI-465156">
        <id>Q9UBH0</id>
        <label>IL36RN</label>
    </interactant>
    <organismsDiffer>false</organismsDiffer>
    <experiments>3</experiments>
</comment>
<comment type="interaction">
    <interactant intactId="EBI-6509505">
        <id>Q0VD86</id>
    </interactant>
    <interactant intactId="EBI-357925">
        <id>Q12905</id>
        <label>ILF2</label>
    </interactant>
    <organismsDiffer>false</organismsDiffer>
    <experiments>3</experiments>
</comment>
<comment type="interaction">
    <interactant intactId="EBI-6509505">
        <id>Q0VD86</id>
    </interactant>
    <interactant intactId="EBI-6509505">
        <id>Q0VD86</id>
        <label>INCA1</label>
    </interactant>
    <organismsDiffer>false</organismsDiffer>
    <experiments>3</experiments>
</comment>
<comment type="interaction">
    <interactant intactId="EBI-6509505">
        <id>Q0VD86</id>
    </interactant>
    <interactant intactId="EBI-488533">
        <id>Q8WYH8</id>
        <label>ING5</label>
    </interactant>
    <organismsDiffer>false</organismsDiffer>
    <experiments>4</experiments>
</comment>
<comment type="interaction">
    <interactant intactId="EBI-6509505">
        <id>Q0VD86</id>
    </interactant>
    <interactant intactId="EBI-11954971">
        <id>Q96MP8-2</id>
        <label>KCTD7</label>
    </interactant>
    <organismsDiffer>false</organismsDiffer>
    <experiments>3</experiments>
</comment>
<comment type="interaction">
    <interactant intactId="EBI-6509505">
        <id>Q0VD86</id>
    </interactant>
    <interactant intactId="EBI-4397613">
        <id>Q7L273</id>
        <label>KCTD9</label>
    </interactant>
    <organismsDiffer>false</organismsDiffer>
    <experiments>3</experiments>
</comment>
<comment type="interaction">
    <interactant intactId="EBI-6509505">
        <id>Q0VD86</id>
    </interactant>
    <interactant intactId="EBI-10188326">
        <id>Q5T5P2-6</id>
        <label>KIAA1217</label>
    </interactant>
    <organismsDiffer>false</organismsDiffer>
    <experiments>3</experiments>
</comment>
<comment type="interaction">
    <interactant intactId="EBI-6509505">
        <id>Q0VD86</id>
    </interactant>
    <interactant intactId="EBI-10294579">
        <id>Q99706</id>
        <label>KIR2DL4</label>
    </interactant>
    <organismsDiffer>false</organismsDiffer>
    <experiments>3</experiments>
</comment>
<comment type="interaction">
    <interactant intactId="EBI-6509505">
        <id>Q0VD86</id>
    </interactant>
    <interactant intactId="EBI-948266">
        <id>O14901</id>
        <label>KLF11</label>
    </interactant>
    <organismsDiffer>false</organismsDiffer>
    <experiments>3</experiments>
</comment>
<comment type="interaction">
    <interactant intactId="EBI-6509505">
        <id>Q0VD86</id>
    </interactant>
    <interactant intactId="EBI-724915">
        <id>Q53HC5</id>
        <label>KLHL26</label>
    </interactant>
    <organismsDiffer>false</organismsDiffer>
    <experiments>3</experiments>
</comment>
<comment type="interaction">
    <interactant intactId="EBI-6509505">
        <id>Q0VD86</id>
    </interactant>
    <interactant intactId="EBI-739890">
        <id>Q9P2K6</id>
        <label>KLHL42</label>
    </interactant>
    <organismsDiffer>false</organismsDiffer>
    <experiments>3</experiments>
</comment>
<comment type="interaction">
    <interactant intactId="EBI-6509505">
        <id>Q0VD86</id>
    </interactant>
    <interactant intactId="EBI-2432309">
        <id>Q92876</id>
        <label>KLK6</label>
    </interactant>
    <organismsDiffer>false</organismsDiffer>
    <experiments>3</experiments>
</comment>
<comment type="interaction">
    <interactant intactId="EBI-6509505">
        <id>Q0VD86</id>
    </interactant>
    <interactant intactId="EBI-1049638">
        <id>Q14525</id>
        <label>KRT33B</label>
    </interactant>
    <organismsDiffer>false</organismsDiffer>
    <experiments>3</experiments>
</comment>
<comment type="interaction">
    <interactant intactId="EBI-6509505">
        <id>Q0VD86</id>
    </interactant>
    <interactant intactId="EBI-702187">
        <id>P13647</id>
        <label>KRT5</label>
    </interactant>
    <organismsDiffer>false</organismsDiffer>
    <experiments>3</experiments>
</comment>
<comment type="interaction">
    <interactant intactId="EBI-6509505">
        <id>Q0VD86</id>
    </interactant>
    <interactant intactId="EBI-2949715">
        <id>O95678</id>
        <label>KRT75</label>
    </interactant>
    <organismsDiffer>false</organismsDiffer>
    <experiments>3</experiments>
</comment>
<comment type="interaction">
    <interactant intactId="EBI-6509505">
        <id>Q0VD86</id>
    </interactant>
    <interactant intactId="EBI-11992140">
        <id>Q3LI76</id>
        <label>KRTAP15-1</label>
    </interactant>
    <organismsDiffer>false</organismsDiffer>
    <experiments>3</experiments>
</comment>
<comment type="interaction">
    <interactant intactId="EBI-6509505">
        <id>Q0VD86</id>
    </interactant>
    <interactant intactId="EBI-12811111">
        <id>Q8IUB9</id>
        <label>KRTAP19-1</label>
    </interactant>
    <organismsDiffer>false</organismsDiffer>
    <experiments>3</experiments>
</comment>
<comment type="interaction">
    <interactant intactId="EBI-6509505">
        <id>Q0VD86</id>
    </interactant>
    <interactant intactId="EBI-1048945">
        <id>Q3LI72</id>
        <label>KRTAP19-5</label>
    </interactant>
    <organismsDiffer>false</organismsDiffer>
    <experiments>5</experiments>
</comment>
<comment type="interaction">
    <interactant intactId="EBI-6509505">
        <id>Q0VD86</id>
    </interactant>
    <interactant intactId="EBI-12805508">
        <id>Q3LI70</id>
        <label>KRTAP19-6</label>
    </interactant>
    <organismsDiffer>false</organismsDiffer>
    <experiments>3</experiments>
</comment>
<comment type="interaction">
    <interactant intactId="EBI-6509505">
        <id>Q0VD86</id>
    </interactant>
    <interactant intactId="EBI-10250562">
        <id>Q6L8G9</id>
        <label>KRTAP5-6</label>
    </interactant>
    <organismsDiffer>false</organismsDiffer>
    <experiments>3</experiments>
</comment>
<comment type="interaction">
    <interactant intactId="EBI-6509505">
        <id>Q0VD86</id>
    </interactant>
    <interactant intactId="EBI-11962084">
        <id>Q3LI66</id>
        <label>KRTAP6-2</label>
    </interactant>
    <organismsDiffer>false</organismsDiffer>
    <experiments>5</experiments>
</comment>
<comment type="interaction">
    <interactant intactId="EBI-6509505">
        <id>Q0VD86</id>
    </interactant>
    <interactant intactId="EBI-22311199">
        <id>Q3LI67</id>
        <label>KRTAP6-3</label>
    </interactant>
    <organismsDiffer>false</organismsDiffer>
    <experiments>3</experiments>
</comment>
<comment type="interaction">
    <interactant intactId="EBI-6509505">
        <id>Q0VD86</id>
    </interactant>
    <interactant intactId="EBI-1043191">
        <id>Q9BYQ3</id>
        <label>KRTAP9-3</label>
    </interactant>
    <organismsDiffer>false</organismsDiffer>
    <experiments>3</experiments>
</comment>
<comment type="interaction">
    <interactant intactId="EBI-6509505">
        <id>Q0VD86</id>
    </interactant>
    <interactant intactId="EBI-739546">
        <id>Q96PV6</id>
        <label>LENG8</label>
    </interactant>
    <organismsDiffer>false</organismsDiffer>
    <experiments>3</experiments>
</comment>
<comment type="interaction">
    <interactant intactId="EBI-6509505">
        <id>Q0VD86</id>
    </interactant>
    <interactant intactId="EBI-1170392">
        <id>P17931</id>
        <label>LGALS3</label>
    </interactant>
    <organismsDiffer>false</organismsDiffer>
    <experiments>3</experiments>
</comment>
<comment type="interaction">
    <interactant intactId="EBI-6509505">
        <id>Q0VD86</id>
    </interactant>
    <interactant intactId="EBI-12039345">
        <id>Q9UBR4-2</id>
        <label>LHX3</label>
    </interactant>
    <organismsDiffer>false</organismsDiffer>
    <experiments>5</experiments>
</comment>
<comment type="interaction">
    <interactant intactId="EBI-6509505">
        <id>Q0VD86</id>
    </interactant>
    <interactant intactId="EBI-12028858">
        <id>Q8IXW0</id>
        <label>LMNTD2</label>
    </interactant>
    <organismsDiffer>false</organismsDiffer>
    <experiments>3</experiments>
</comment>
<comment type="interaction">
    <interactant intactId="EBI-6509505">
        <id>Q0VD86</id>
    </interactant>
    <interactant intactId="EBI-11959475">
        <id>P25791-3</id>
        <label>LMO2</label>
    </interactant>
    <organismsDiffer>false</organismsDiffer>
    <experiments>3</experiments>
</comment>
<comment type="interaction">
    <interactant intactId="EBI-6509505">
        <id>Q0VD86</id>
    </interactant>
    <interactant intactId="EBI-11742507">
        <id>Q8TAP4-4</id>
        <label>LMO3</label>
    </interactant>
    <organismsDiffer>false</organismsDiffer>
    <experiments>5</experiments>
</comment>
<comment type="interaction">
    <interactant intactId="EBI-6509505">
        <id>Q0VD86</id>
    </interactant>
    <interactant intactId="EBI-348239">
        <id>P62310</id>
        <label>LSM3</label>
    </interactant>
    <organismsDiffer>false</organismsDiffer>
    <experiments>3</experiments>
</comment>
<comment type="interaction">
    <interactant intactId="EBI-6509505">
        <id>Q0VD86</id>
    </interactant>
    <interactant intactId="EBI-715999">
        <id>O95372</id>
        <label>LYPLA2</label>
    </interactant>
    <organismsDiffer>false</organismsDiffer>
    <experiments>3</experiments>
</comment>
<comment type="interaction">
    <interactant intactId="EBI-6509505">
        <id>Q0VD86</id>
    </interactant>
    <interactant intactId="EBI-77889">
        <id>Q9UI95</id>
        <label>MAD2L2</label>
    </interactant>
    <organismsDiffer>false</organismsDiffer>
    <experiments>3</experiments>
</comment>
<comment type="interaction">
    <interactant intactId="EBI-6509505">
        <id>Q0VD86</id>
    </interactant>
    <interactant intactId="EBI-721864">
        <id>Q96JG8</id>
        <label>MAGED4</label>
    </interactant>
    <organismsDiffer>false</organismsDiffer>
    <experiments>3</experiments>
</comment>
<comment type="interaction">
    <interactant intactId="EBI-6509505">
        <id>Q0VD86</id>
    </interactant>
    <interactant intactId="EBI-746778">
        <id>Q96A72</id>
        <label>MAGOHB</label>
    </interactant>
    <organismsDiffer>false</organismsDiffer>
    <experiments>3</experiments>
</comment>
<comment type="interaction">
    <interactant intactId="EBI-6509505">
        <id>Q0VD86</id>
    </interactant>
    <interactant intactId="EBI-2339737">
        <id>Q96EH3</id>
        <label>MALSU1</label>
    </interactant>
    <organismsDiffer>false</organismsDiffer>
    <experiments>3</experiments>
</comment>
<comment type="interaction">
    <interactant intactId="EBI-6509505">
        <id>Q0VD86</id>
    </interactant>
    <interactant intactId="EBI-5235902">
        <id>Q9Y4F3</id>
        <label>MARF1</label>
    </interactant>
    <organismsDiffer>false</organismsDiffer>
    <experiments>3</experiments>
</comment>
<comment type="interaction">
    <interactant intactId="EBI-6509505">
        <id>Q0VD86</id>
    </interactant>
    <interactant intactId="EBI-968587">
        <id>Q9P0L2</id>
        <label>MARK1</label>
    </interactant>
    <organismsDiffer>false</organismsDiffer>
    <experiments>3</experiments>
</comment>
<comment type="interaction">
    <interactant intactId="EBI-6509505">
        <id>Q0VD86</id>
    </interactant>
    <interactant intactId="EBI-6262458">
        <id>O15232</id>
        <label>MATN3</label>
    </interactant>
    <organismsDiffer>false</organismsDiffer>
    <experiments>3</experiments>
</comment>
<comment type="interaction">
    <interactant intactId="EBI-6509505">
        <id>Q0VD86</id>
    </interactant>
    <interactant intactId="EBI-12022316">
        <id>Q9BUN1</id>
        <label>MENT</label>
    </interactant>
    <organismsDiffer>false</organismsDiffer>
    <experiments>3</experiments>
</comment>
<comment type="interaction">
    <interactant intactId="EBI-6509505">
        <id>Q0VD86</id>
    </interactant>
    <interactant intactId="EBI-1051435">
        <id>P53582</id>
        <label>METAP1</label>
    </interactant>
    <organismsDiffer>false</organismsDiffer>
    <experiments>3</experiments>
</comment>
<comment type="interaction">
    <interactant intactId="EBI-6509505">
        <id>Q0VD86</id>
    </interactant>
    <interactant intactId="EBI-742459">
        <id>Q9BU76</id>
        <label>MMTAG2</label>
    </interactant>
    <organismsDiffer>false</organismsDiffer>
    <experiments>3</experiments>
</comment>
<comment type="interaction">
    <interactant intactId="EBI-6509505">
        <id>Q0VD86</id>
    </interactant>
    <interactant intactId="EBI-711788">
        <id>Q00013</id>
        <label>MPP1</label>
    </interactant>
    <organismsDiffer>false</organismsDiffer>
    <experiments>3</experiments>
</comment>
<comment type="interaction">
    <interactant intactId="EBI-6509505">
        <id>Q0VD86</id>
    </interactant>
    <interactant intactId="EBI-12330065">
        <id>Q9NZV6</id>
        <label>MSRB1</label>
    </interactant>
    <organismsDiffer>false</organismsDiffer>
    <experiments>3</experiments>
</comment>
<comment type="interaction">
    <interactant intactId="EBI-6509505">
        <id>Q0VD86</id>
    </interactant>
    <interactant intactId="EBI-744593">
        <id>Q96QG7</id>
        <label>MTMR9</label>
    </interactant>
    <organismsDiffer>false</organismsDiffer>
    <experiments>3</experiments>
</comment>
<comment type="interaction">
    <interactant intactId="EBI-6509505">
        <id>Q0VD86</id>
    </interactant>
    <interactant intactId="EBI-8656665">
        <id>Q8N6N6</id>
        <label>NATD1</label>
    </interactant>
    <organismsDiffer>false</organismsDiffer>
    <experiments>3</experiments>
</comment>
<comment type="interaction">
    <interactant intactId="EBI-6509505">
        <id>Q0VD86</id>
    </interactant>
    <interactant intactId="EBI-713635">
        <id>O43639</id>
        <label>NCK2</label>
    </interactant>
    <organismsDiffer>false</organismsDiffer>
    <experiments>3</experiments>
</comment>
<comment type="interaction">
    <interactant intactId="EBI-6509505">
        <id>Q0VD86</id>
    </interactant>
    <interactant intactId="EBI-2114801">
        <id>Q9BU61</id>
        <label>NDUFAF3</label>
    </interactant>
    <organismsDiffer>false</organismsDiffer>
    <experiments>3</experiments>
</comment>
<comment type="interaction">
    <interactant intactId="EBI-6509505">
        <id>Q0VD86</id>
    </interactant>
    <interactant intactId="EBI-11746523">
        <id>Q14511-2</id>
        <label>NEDD9</label>
    </interactant>
    <organismsDiffer>false</organismsDiffer>
    <experiments>3</experiments>
</comment>
<comment type="interaction">
    <interactant intactId="EBI-6509505">
        <id>Q0VD86</id>
    </interactant>
    <interactant intactId="EBI-10281234">
        <id>Q969S2</id>
        <label>NEIL2</label>
    </interactant>
    <organismsDiffer>false</organismsDiffer>
    <experiments>3</experiments>
</comment>
<comment type="interaction">
    <interactant intactId="EBI-6509505">
        <id>Q0VD86</id>
    </interactant>
    <interactant intactId="EBI-740364">
        <id>Q9HC98</id>
        <label>NEK6</label>
    </interactant>
    <organismsDiffer>false</organismsDiffer>
    <experiments>4</experiments>
</comment>
<comment type="interaction">
    <interactant intactId="EBI-6509505">
        <id>Q0VD86</id>
    </interactant>
    <interactant intactId="EBI-11750983">
        <id>Q9HC98-4</id>
        <label>NEK6</label>
    </interactant>
    <organismsDiffer>false</organismsDiffer>
    <experiments>3</experiments>
</comment>
<comment type="interaction">
    <interactant intactId="EBI-6509505">
        <id>Q0VD86</id>
    </interactant>
    <interactant intactId="EBI-10271199">
        <id>Q8NI38</id>
        <label>NFKBID</label>
    </interactant>
    <organismsDiffer>false</organismsDiffer>
    <experiments>3</experiments>
</comment>
<comment type="interaction">
    <interactant intactId="EBI-6509505">
        <id>Q0VD86</id>
    </interactant>
    <interactant intactId="EBI-2859639">
        <id>Q5HYW2</id>
        <label>NHSL2</label>
    </interactant>
    <organismsDiffer>false</organismsDiffer>
    <experiments>3</experiments>
</comment>
<comment type="interaction">
    <interactant intactId="EBI-6509505">
        <id>Q0VD86</id>
    </interactant>
    <interactant intactId="EBI-744782">
        <id>Q9Y5B8</id>
        <label>NME7</label>
    </interactant>
    <organismsDiffer>false</organismsDiffer>
    <experiments>5</experiments>
</comment>
<comment type="interaction">
    <interactant intactId="EBI-6509505">
        <id>Q0VD86</id>
    </interactant>
    <interactant intactId="EBI-10315485">
        <id>Q9NWW6</id>
        <label>NMRK1</label>
    </interactant>
    <organismsDiffer>false</organismsDiffer>
    <experiments>3</experiments>
</comment>
<comment type="interaction">
    <interactant intactId="EBI-6509505">
        <id>Q0VD86</id>
    </interactant>
    <interactant intactId="EBI-3932727">
        <id>Q99743</id>
        <label>NPAS2</label>
    </interactant>
    <organismsDiffer>false</organismsDiffer>
    <experiments>3</experiments>
</comment>
<comment type="interaction">
    <interactant intactId="EBI-6509505">
        <id>Q0VD86</id>
    </interactant>
    <interactant intactId="EBI-741158">
        <id>Q96HA8</id>
        <label>NTAQ1</label>
    </interactant>
    <organismsDiffer>false</organismsDiffer>
    <experiments>5</experiments>
</comment>
<comment type="interaction">
    <interactant intactId="EBI-6509505">
        <id>Q0VD86</id>
    </interactant>
    <interactant intactId="EBI-1048886">
        <id>Q9Y5Y2</id>
        <label>NUBP2</label>
    </interactant>
    <organismsDiffer>false</organismsDiffer>
    <experiments>3</experiments>
</comment>
<comment type="interaction">
    <interactant intactId="EBI-6509505">
        <id>Q0VD86</id>
    </interactant>
    <interactant intactId="EBI-2949792">
        <id>Q9BRJ7</id>
        <label>NUDT16L1</label>
    </interactant>
    <organismsDiffer>false</organismsDiffer>
    <experiments>3</experiments>
</comment>
<comment type="interaction">
    <interactant intactId="EBI-6509505">
        <id>Q0VD86</id>
    </interactant>
    <interactant intactId="EBI-10297093">
        <id>Q9BRQ3</id>
        <label>NUDT22</label>
    </interactant>
    <organismsDiffer>false</organismsDiffer>
    <experiments>3</experiments>
</comment>
<comment type="interaction">
    <interactant intactId="EBI-6509505">
        <id>Q0VD86</id>
    </interactant>
    <interactant intactId="EBI-12176191">
        <id>O95007</id>
        <label>OR6B1</label>
    </interactant>
    <organismsDiffer>false</organismsDiffer>
    <experiments>3</experiments>
</comment>
<comment type="interaction">
    <interactant intactId="EBI-6509505">
        <id>Q0VD86</id>
    </interactant>
    <interactant intactId="EBI-9057006">
        <id>Q9UJX0</id>
        <label>OSGIN1</label>
    </interactant>
    <organismsDiffer>false</organismsDiffer>
    <experiments>6</experiments>
</comment>
<comment type="interaction">
    <interactant intactId="EBI-6509505">
        <id>Q0VD86</id>
    </interactant>
    <interactant intactId="EBI-10488185">
        <id>Q9ULW8</id>
        <label>PADI3</label>
    </interactant>
    <organismsDiffer>false</organismsDiffer>
    <experiments>3</experiments>
</comment>
<comment type="interaction">
    <interactant intactId="EBI-6509505">
        <id>Q0VD86</id>
    </interactant>
    <interactant intactId="EBI-10277790">
        <id>Q8WXA2</id>
        <label>PATE1</label>
    </interactant>
    <organismsDiffer>false</organismsDiffer>
    <experiments>3</experiments>
</comment>
<comment type="interaction">
    <interactant intactId="EBI-6509505">
        <id>Q0VD86</id>
    </interactant>
    <interactant intactId="EBI-11956269">
        <id>Q92824-2</id>
        <label>PCSK5</label>
    </interactant>
    <organismsDiffer>false</organismsDiffer>
    <experiments>3</experiments>
</comment>
<comment type="interaction">
    <interactant intactId="EBI-6509505">
        <id>Q0VD86</id>
    </interactant>
    <interactant intactId="EBI-750317">
        <id>Q99447</id>
        <label>PCYT2</label>
    </interactant>
    <organismsDiffer>false</organismsDiffer>
    <experiments>3</experiments>
</comment>
<comment type="interaction">
    <interactant intactId="EBI-6509505">
        <id>Q0VD86</id>
    </interactant>
    <interactant intactId="EBI-2861634">
        <id>Q9P0J1</id>
        <label>PDP1</label>
    </interactant>
    <organismsDiffer>false</organismsDiffer>
    <experiments>3</experiments>
</comment>
<comment type="interaction">
    <interactant intactId="EBI-6509505">
        <id>Q0VD86</id>
    </interactant>
    <interactant intactId="EBI-716404">
        <id>P16284</id>
        <label>PECAM1</label>
    </interactant>
    <organismsDiffer>false</organismsDiffer>
    <experiments>3</experiments>
</comment>
<comment type="interaction">
    <interactant intactId="EBI-6509505">
        <id>Q0VD86</id>
    </interactant>
    <interactant intactId="EBI-724639">
        <id>Q9UBV8</id>
        <label>PEF1</label>
    </interactant>
    <organismsDiffer>false</organismsDiffer>
    <experiments>3</experiments>
</comment>
<comment type="interaction">
    <interactant intactId="EBI-6509505">
        <id>Q0VD86</id>
    </interactant>
    <interactant intactId="EBI-357275">
        <id>Q99471</id>
        <label>PFDN5</label>
    </interactant>
    <organismsDiffer>false</organismsDiffer>
    <experiments>3</experiments>
</comment>
<comment type="interaction">
    <interactant intactId="EBI-6509505">
        <id>Q0VD86</id>
    </interactant>
    <interactant intactId="EBI-530034">
        <id>O43189</id>
        <label>PHF1</label>
    </interactant>
    <organismsDiffer>false</organismsDiffer>
    <experiments>3</experiments>
</comment>
<comment type="interaction">
    <interactant intactId="EBI-6509505">
        <id>Q0VD86</id>
    </interactant>
    <interactant intactId="EBI-726466">
        <id>O15496</id>
        <label>PLA2G10</label>
    </interactant>
    <organismsDiffer>false</organismsDiffer>
    <experiments>3</experiments>
</comment>
<comment type="interaction">
    <interactant intactId="EBI-6509505">
        <id>Q0VD86</id>
    </interactant>
    <interactant intactId="EBI-2827556">
        <id>Q13393</id>
        <label>PLD1</label>
    </interactant>
    <organismsDiffer>false</organismsDiffer>
    <experiments>3</experiments>
</comment>
<comment type="interaction">
    <interactant intactId="EBI-6509505">
        <id>Q0VD86</id>
    </interactant>
    <interactant intactId="EBI-750734">
        <id>Q9NRY6</id>
        <label>PLSCR3</label>
    </interactant>
    <organismsDiffer>false</organismsDiffer>
    <experiments>3</experiments>
</comment>
<comment type="interaction">
    <interactant intactId="EBI-6509505">
        <id>Q0VD86</id>
    </interactant>
    <interactant intactId="EBI-1055079">
        <id>O15160</id>
        <label>POLR1C</label>
    </interactant>
    <organismsDiffer>false</organismsDiffer>
    <experiments>3</experiments>
</comment>
<comment type="interaction">
    <interactant intactId="EBI-6509505">
        <id>Q0VD86</id>
    </interactant>
    <interactant intactId="EBI-5452779">
        <id>Q9BUI4</id>
        <label>POLR3C</label>
    </interactant>
    <organismsDiffer>false</organismsDiffer>
    <experiments>3</experiments>
</comment>
<comment type="interaction">
    <interactant intactId="EBI-6509505">
        <id>Q0VD86</id>
    </interactant>
    <interactant intactId="EBI-366525">
        <id>Q969H6</id>
        <label>POP5</label>
    </interactant>
    <organismsDiffer>false</organismsDiffer>
    <experiments>3</experiments>
</comment>
<comment type="interaction">
    <interactant intactId="EBI-6509505">
        <id>Q0VD86</id>
    </interactant>
    <interactant intactId="EBI-17236143">
        <id>Q12837</id>
        <label>POU4F2</label>
    </interactant>
    <organismsDiffer>false</organismsDiffer>
    <experiments>3</experiments>
</comment>
<comment type="interaction">
    <interactant intactId="EBI-6509505">
        <id>Q0VD86</id>
    </interactant>
    <interactant intactId="EBI-752074">
        <id>P41219</id>
        <label>PRPH</label>
    </interactant>
    <organismsDiffer>false</organismsDiffer>
    <experiments>3</experiments>
</comment>
<comment type="interaction">
    <interactant intactId="EBI-6509505">
        <id>Q0VD86</id>
    </interactant>
    <interactant intactId="EBI-359335">
        <id>P49721</id>
        <label>PSMB2</label>
    </interactant>
    <organismsDiffer>false</organismsDiffer>
    <experiments>3</experiments>
</comment>
<comment type="interaction">
    <interactant intactId="EBI-6509505">
        <id>Q0VD86</id>
    </interactant>
    <interactant intactId="EBI-372312">
        <id>P28062-2</id>
        <label>PSMB8</label>
    </interactant>
    <organismsDiffer>false</organismsDiffer>
    <experiments>3</experiments>
</comment>
<comment type="interaction">
    <interactant intactId="EBI-6509505">
        <id>Q0VD86</id>
    </interactant>
    <interactant intactId="EBI-10234038">
        <id>P43115-12</id>
        <label>PTGER3</label>
    </interactant>
    <organismsDiffer>false</organismsDiffer>
    <experiments>3</experiments>
</comment>
<comment type="interaction">
    <interactant intactId="EBI-6509505">
        <id>Q0VD86</id>
    </interactant>
    <interactant intactId="EBI-948428">
        <id>Q9Y2K5</id>
        <label>R3HDM2</label>
    </interactant>
    <organismsDiffer>false</organismsDiffer>
    <experiments>3</experiments>
</comment>
<comment type="interaction">
    <interactant intactId="EBI-6509505">
        <id>Q0VD86</id>
    </interactant>
    <interactant intactId="EBI-399437">
        <id>P20339</id>
        <label>RAB5A</label>
    </interactant>
    <organismsDiffer>false</organismsDiffer>
    <experiments>3</experiments>
</comment>
<comment type="interaction">
    <interactant intactId="EBI-6509505">
        <id>Q0VD86</id>
    </interactant>
    <interactant intactId="EBI-1054923">
        <id>P51148</id>
        <label>RAB5C</label>
    </interactant>
    <organismsDiffer>false</organismsDiffer>
    <experiments>2</experiments>
</comment>
<comment type="interaction">
    <interactant intactId="EBI-6509505">
        <id>Q0VD86</id>
    </interactant>
    <interactant intactId="EBI-296739">
        <id>P63244</id>
        <label>RACK1</label>
    </interactant>
    <organismsDiffer>false</organismsDiffer>
    <experiments>2</experiments>
</comment>
<comment type="interaction">
    <interactant intactId="EBI-6509505">
        <id>Q0VD86</id>
    </interactant>
    <interactant intactId="EBI-752162">
        <id>P11234</id>
        <label>RALB</label>
    </interactant>
    <organismsDiffer>false</organismsDiffer>
    <experiments>3</experiments>
</comment>
<comment type="interaction">
    <interactant intactId="EBI-6509505">
        <id>Q0VD86</id>
    </interactant>
    <interactant intactId="EBI-744023">
        <id>Q9BTL3</id>
        <label>RAMAC</label>
    </interactant>
    <organismsDiffer>false</organismsDiffer>
    <experiments>6</experiments>
</comment>
<comment type="interaction">
    <interactant intactId="EBI-6509505">
        <id>Q0VD86</id>
    </interactant>
    <interactant intactId="EBI-740322">
        <id>Q93062</id>
        <label>RBPMS</label>
    </interactant>
    <organismsDiffer>false</organismsDiffer>
    <experiments>3</experiments>
</comment>
<comment type="interaction">
    <interactant intactId="EBI-6509505">
        <id>Q0VD86</id>
    </interactant>
    <interactant intactId="EBI-740343">
        <id>Q93062-3</id>
        <label>RBPMS</label>
    </interactant>
    <organismsDiffer>false</organismsDiffer>
    <experiments>3</experiments>
</comment>
<comment type="interaction">
    <interactant intactId="EBI-6509505">
        <id>Q0VD86</id>
    </interactant>
    <interactant intactId="EBI-10253121">
        <id>Q6P9E2</id>
        <label>RECK</label>
    </interactant>
    <organismsDiffer>false</organismsDiffer>
    <experiments>3</experiments>
</comment>
<comment type="interaction">
    <interactant intactId="EBI-6509505">
        <id>Q0VD86</id>
    </interactant>
    <interactant intactId="EBI-1055010">
        <id>P40938</id>
        <label>RFC3</label>
    </interactant>
    <organismsDiffer>false</organismsDiffer>
    <experiments>3</experiments>
</comment>
<comment type="interaction">
    <interactant intactId="EBI-6509505">
        <id>Q0VD86</id>
    </interactant>
    <interactant intactId="EBI-12092053">
        <id>P57055</id>
        <label>RIPPLY3</label>
    </interactant>
    <organismsDiffer>false</organismsDiffer>
    <experiments>3</experiments>
</comment>
<comment type="interaction">
    <interactant intactId="EBI-6509505">
        <id>Q0VD86</id>
    </interactant>
    <interactant intactId="EBI-2129375">
        <id>Q9BY78</id>
        <label>RNF26</label>
    </interactant>
    <organismsDiffer>false</organismsDiffer>
    <experiments>2</experiments>
</comment>
<comment type="interaction">
    <interactant intactId="EBI-6509505">
        <id>Q0VD86</id>
    </interactant>
    <interactant intactId="EBI-1044156">
        <id>O00422</id>
        <label>SAP18</label>
    </interactant>
    <organismsDiffer>false</organismsDiffer>
    <experiments>3</experiments>
</comment>
<comment type="interaction">
    <interactant intactId="EBI-6509505">
        <id>Q0VD86</id>
    </interactant>
    <interactant intactId="EBI-12000762">
        <id>Q7Z5V6-2</id>
        <label>SAXO4</label>
    </interactant>
    <organismsDiffer>false</organismsDiffer>
    <experiments>3</experiments>
</comment>
<comment type="interaction">
    <interactant intactId="EBI-6509505">
        <id>Q0VD86</id>
    </interactant>
    <interactant intactId="EBI-748391">
        <id>Q9BWG6</id>
        <label>SCNM1</label>
    </interactant>
    <organismsDiffer>false</organismsDiffer>
    <experiments>4</experiments>
</comment>
<comment type="interaction">
    <interactant intactId="EBI-6509505">
        <id>Q0VD86</id>
    </interactant>
    <interactant intactId="EBI-10320311">
        <id>Q9UDX3</id>
        <label>SEC14L4</label>
    </interactant>
    <organismsDiffer>false</organismsDiffer>
    <experiments>3</experiments>
</comment>
<comment type="interaction">
    <interactant intactId="EBI-6509505">
        <id>Q0VD86</id>
    </interactant>
    <interactant intactId="EBI-11955083">
        <id>Q9NUL5-4</id>
        <label>SHFL</label>
    </interactant>
    <organismsDiffer>false</organismsDiffer>
    <experiments>3</experiments>
</comment>
<comment type="interaction">
    <interactant intactId="EBI-6509505">
        <id>Q0VD86</id>
    </interactant>
    <interactant intactId="EBI-12829638">
        <id>Q8N1D0-2</id>
        <label>SLC22A18AS</label>
    </interactant>
    <organismsDiffer>false</organismsDiffer>
    <experiments>3</experiments>
</comment>
<comment type="interaction">
    <interactant intactId="EBI-6509505">
        <id>Q0VD86</id>
    </interactant>
    <interactant intactId="EBI-2872322">
        <id>Q9H0W8</id>
        <label>SMG9</label>
    </interactant>
    <organismsDiffer>false</organismsDiffer>
    <experiments>3</experiments>
</comment>
<comment type="interaction">
    <interactant intactId="EBI-6509505">
        <id>Q0VD86</id>
    </interactant>
    <interactant intactId="EBI-12275818">
        <id>Q53HV7-2</id>
        <label>SMUG1</label>
    </interactant>
    <organismsDiffer>false</organismsDiffer>
    <experiments>3</experiments>
</comment>
<comment type="interaction">
    <interactant intactId="EBI-6509505">
        <id>Q0VD86</id>
    </interactant>
    <interactant intactId="EBI-372475">
        <id>P14678-2</id>
        <label>SNRPB</label>
    </interactant>
    <organismsDiffer>false</organismsDiffer>
    <experiments>3</experiments>
</comment>
<comment type="interaction">
    <interactant intactId="EBI-6509505">
        <id>Q0VD86</id>
    </interactant>
    <interactant intactId="EBI-11959123">
        <id>Q99932-2</id>
        <label>SPAG8</label>
    </interactant>
    <organismsDiffer>false</organismsDiffer>
    <experiments>3</experiments>
</comment>
<comment type="interaction">
    <interactant intactId="EBI-6509505">
        <id>Q0VD86</id>
    </interactant>
    <interactant intactId="EBI-742688">
        <id>Q9NZD8</id>
        <label>SPG21</label>
    </interactant>
    <organismsDiffer>false</organismsDiffer>
    <experiments>6</experiments>
</comment>
<comment type="interaction">
    <interactant intactId="EBI-6509505">
        <id>Q0VD86</id>
    </interactant>
    <interactant intactId="EBI-2880213">
        <id>Q5T280</id>
        <label>SPOUT1</label>
    </interactant>
    <organismsDiffer>false</organismsDiffer>
    <experiments>2</experiments>
</comment>
<comment type="interaction">
    <interactant intactId="EBI-6509505">
        <id>Q0VD86</id>
    </interactant>
    <interactant intactId="EBI-3866665">
        <id>O43609</id>
        <label>SPRY1</label>
    </interactant>
    <organismsDiffer>false</organismsDiffer>
    <experiments>3</experiments>
</comment>
<comment type="interaction">
    <interactant intactId="EBI-6509505">
        <id>Q0VD86</id>
    </interactant>
    <interactant intactId="EBI-745021">
        <id>Q96FJ0</id>
        <label>STAMBPL1</label>
    </interactant>
    <organismsDiffer>false</organismsDiffer>
    <experiments>3</experiments>
</comment>
<comment type="interaction">
    <interactant intactId="EBI-6509505">
        <id>Q0VD86</id>
    </interactant>
    <interactant intactId="EBI-749295">
        <id>O75716</id>
        <label>STK16</label>
    </interactant>
    <organismsDiffer>false</organismsDiffer>
    <experiments>6</experiments>
</comment>
<comment type="interaction">
    <interactant intactId="EBI-6509505">
        <id>Q0VD86</id>
    </interactant>
    <interactant intactId="EBI-2256290">
        <id>Q8TCJ2</id>
        <label>STT3B</label>
    </interactant>
    <organismsDiffer>false</organismsDiffer>
    <experiments>3</experiments>
</comment>
<comment type="interaction">
    <interactant intactId="EBI-6509505">
        <id>Q0VD86</id>
    </interactant>
    <interactant intactId="EBI-3921347">
        <id>P51687</id>
        <label>SUOX</label>
    </interactant>
    <organismsDiffer>false</organismsDiffer>
    <experiments>5</experiments>
</comment>
<comment type="interaction">
    <interactant intactId="EBI-6509505">
        <id>Q0VD86</id>
    </interactant>
    <interactant intactId="EBI-3258000">
        <id>Q9P0N9</id>
        <label>TBC1D7</label>
    </interactant>
    <organismsDiffer>false</organismsDiffer>
    <experiments>3</experiments>
</comment>
<comment type="interaction">
    <interactant intactId="EBI-6509505">
        <id>Q0VD86</id>
    </interactant>
    <interactant intactId="EBI-749995">
        <id>P56279</id>
        <label>TCL1A</label>
    </interactant>
    <organismsDiffer>false</organismsDiffer>
    <experiments>3</experiments>
</comment>
<comment type="interaction">
    <interactant intactId="EBI-6509505">
        <id>Q0VD86</id>
    </interactant>
    <interactant intactId="EBI-747736">
        <id>Q15561</id>
        <label>TEAD4</label>
    </interactant>
    <organismsDiffer>false</organismsDiffer>
    <experiments>3</experiments>
</comment>
<comment type="interaction">
    <interactant intactId="EBI-6509505">
        <id>Q0VD86</id>
    </interactant>
    <interactant intactId="EBI-750487">
        <id>Q8WW24</id>
        <label>TEKT4</label>
    </interactant>
    <organismsDiffer>false</organismsDiffer>
    <experiments>3</experiments>
</comment>
<comment type="interaction">
    <interactant intactId="EBI-6509505">
        <id>Q0VD86</id>
    </interactant>
    <interactant intactId="EBI-12090309">
        <id>Q9BXU0</id>
        <label>TEX12</label>
    </interactant>
    <organismsDiffer>false</organismsDiffer>
    <experiments>3</experiments>
</comment>
<comment type="interaction">
    <interactant intactId="EBI-6509505">
        <id>Q0VD86</id>
    </interactant>
    <interactant intactId="EBI-12194905">
        <id>P05549-5</id>
        <label>TFAP2A</label>
    </interactant>
    <organismsDiffer>false</organismsDiffer>
    <experiments>3</experiments>
</comment>
<comment type="interaction">
    <interactant intactId="EBI-6509505">
        <id>Q0VD86</id>
    </interactant>
    <interactant intactId="EBI-11952651">
        <id>Q7Z6R9</id>
        <label>TFAP2D</label>
    </interactant>
    <organismsDiffer>false</organismsDiffer>
    <experiments>5</experiments>
</comment>
<comment type="interaction">
    <interactant intactId="EBI-6509505">
        <id>Q0VD86</id>
    </interactant>
    <interactant intactId="EBI-2514218">
        <id>Q01664</id>
        <label>TFAP4</label>
    </interactant>
    <organismsDiffer>false</organismsDiffer>
    <experiments>3</experiments>
</comment>
<comment type="interaction">
    <interactant intactId="EBI-6509505">
        <id>Q0VD86</id>
    </interactant>
    <interactant intactId="EBI-357061">
        <id>Q92734</id>
        <label>TFG</label>
    </interactant>
    <organismsDiffer>false</organismsDiffer>
    <experiments>3</experiments>
</comment>
<comment type="interaction">
    <interactant intactId="EBI-6509505">
        <id>Q0VD86</id>
    </interactant>
    <interactant intactId="EBI-3925505">
        <id>Q8TBB0</id>
        <label>THAP6</label>
    </interactant>
    <organismsDiffer>false</organismsDiffer>
    <experiments>3</experiments>
</comment>
<comment type="interaction">
    <interactant intactId="EBI-6509505">
        <id>Q0VD86</id>
    </interactant>
    <interactant intactId="EBI-1749955">
        <id>Q92748</id>
        <label>THRSP</label>
    </interactant>
    <organismsDiffer>false</organismsDiffer>
    <experiments>3</experiments>
</comment>
<comment type="interaction">
    <interactant intactId="EBI-6509505">
        <id>Q0VD86</id>
    </interactant>
    <interactant intactId="EBI-11064654">
        <id>Q01085-2</id>
        <label>TIAL1</label>
    </interactant>
    <organismsDiffer>false</organismsDiffer>
    <experiments>3</experiments>
</comment>
<comment type="interaction">
    <interactant intactId="EBI-6509505">
        <id>Q0VD86</id>
    </interactant>
    <interactant intactId="EBI-14115717">
        <id>Q8N7U7-2</id>
        <label>TPRX1</label>
    </interactant>
    <organismsDiffer>false</organismsDiffer>
    <experiments>3</experiments>
</comment>
<comment type="interaction">
    <interactant intactId="EBI-6509505">
        <id>Q0VD86</id>
    </interactant>
    <interactant intactId="EBI-11961968">
        <id>P0DI81-3</id>
        <label>TRAPPC2</label>
    </interactant>
    <organismsDiffer>false</organismsDiffer>
    <experiments>3</experiments>
</comment>
<comment type="interaction">
    <interactant intactId="EBI-6509505">
        <id>Q0VD86</id>
    </interactant>
    <interactant intactId="EBI-8451480">
        <id>O75865-2</id>
        <label>TRAPPC6A</label>
    </interactant>
    <organismsDiffer>false</organismsDiffer>
    <experiments>3</experiments>
</comment>
<comment type="interaction">
    <interactant intactId="EBI-6509505">
        <id>Q0VD86</id>
    </interactant>
    <interactant intactId="EBI-492476">
        <id>Q96RU7</id>
        <label>TRIB3</label>
    </interactant>
    <organismsDiffer>false</organismsDiffer>
    <experiments>3</experiments>
</comment>
<comment type="interaction">
    <interactant intactId="EBI-6509505">
        <id>Q0VD86</id>
    </interactant>
    <interactant intactId="EBI-2341136">
        <id>Q12899</id>
        <label>TRIM26</label>
    </interactant>
    <organismsDiffer>false</organismsDiffer>
    <experiments>2</experiments>
</comment>
<comment type="interaction">
    <interactant intactId="EBI-6509505">
        <id>Q0VD86</id>
    </interactant>
    <interactant intactId="EBI-2130449">
        <id>Q6AZZ1</id>
        <label>TRIM68</label>
    </interactant>
    <organismsDiffer>false</organismsDiffer>
    <experiments>3</experiments>
</comment>
<comment type="interaction">
    <interactant intactId="EBI-6509505">
        <id>Q0VD86</id>
    </interactant>
    <interactant intactId="EBI-358993">
        <id>Q15645</id>
        <label>TRIP13</label>
    </interactant>
    <organismsDiffer>false</organismsDiffer>
    <experiments>3</experiments>
</comment>
<comment type="interaction">
    <interactant intactId="EBI-6509505">
        <id>Q0VD86</id>
    </interactant>
    <interactant intactId="EBI-742327">
        <id>Q15654</id>
        <label>TRIP6</label>
    </interactant>
    <organismsDiffer>false</organismsDiffer>
    <experiments>3</experiments>
</comment>
<comment type="interaction">
    <interactant intactId="EBI-6509505">
        <id>Q0VD86</id>
    </interactant>
    <interactant intactId="EBI-372432">
        <id>Q8WW01</id>
        <label>TSEN15</label>
    </interactant>
    <organismsDiffer>false</organismsDiffer>
    <experiments>3</experiments>
</comment>
<comment type="interaction">
    <interactant intactId="EBI-6509505">
        <id>Q0VD86</id>
    </interactant>
    <interactant intactId="EBI-346882">
        <id>Q99816</id>
        <label>TSG101</label>
    </interactant>
    <organismsDiffer>false</organismsDiffer>
    <experiments>3</experiments>
</comment>
<comment type="interaction">
    <interactant intactId="EBI-6509505">
        <id>Q0VD86</id>
    </interactant>
    <interactant intactId="EBI-3918381">
        <id>Q96PN8</id>
        <label>TSSK3</label>
    </interactant>
    <organismsDiffer>false</organismsDiffer>
    <experiments>3</experiments>
</comment>
<comment type="interaction">
    <interactant intactId="EBI-6509505">
        <id>Q0VD86</id>
    </interactant>
    <interactant intactId="EBI-8994397">
        <id>Q5T7W7</id>
        <label>TSTD2</label>
    </interactant>
    <organismsDiffer>false</organismsDiffer>
    <experiments>3</experiments>
</comment>
<comment type="interaction">
    <interactant intactId="EBI-6509505">
        <id>Q0VD86</id>
    </interactant>
    <interactant intactId="EBI-1055906">
        <id>Q9BRA2</id>
        <label>TXNDC17</label>
    </interactant>
    <organismsDiffer>false</organismsDiffer>
    <experiments>3</experiments>
</comment>
<comment type="interaction">
    <interactant intactId="EBI-6509505">
        <id>Q0VD86</id>
    </interactant>
    <interactant intactId="EBI-1380492">
        <id>Q8TF42</id>
        <label>UBASH3B</label>
    </interactant>
    <organismsDiffer>false</organismsDiffer>
    <experiments>3</experiments>
</comment>
<comment type="interaction">
    <interactant intactId="EBI-6509505">
        <id>Q0VD86</id>
    </interactant>
    <interactant intactId="EBI-745527">
        <id>Q9Y2X8</id>
        <label>UBE2D4</label>
    </interactant>
    <organismsDiffer>false</organismsDiffer>
    <experiments>3</experiments>
</comment>
<comment type="interaction">
    <interactant intactId="EBI-6509505">
        <id>Q0VD86</id>
    </interactant>
    <interactant intactId="EBI-720977">
        <id>Q9H832</id>
        <label>UBE2Z</label>
    </interactant>
    <organismsDiffer>false</organismsDiffer>
    <experiments>3</experiments>
</comment>
<comment type="interaction">
    <interactant intactId="EBI-6509505">
        <id>Q0VD86</id>
    </interactant>
    <interactant intactId="EBI-12867288">
        <id>Q8WUN7</id>
        <label>UBTD2</label>
    </interactant>
    <organismsDiffer>false</organismsDiffer>
    <experiments>3</experiments>
</comment>
<comment type="interaction">
    <interactant intactId="EBI-6509505">
        <id>Q0VD86</id>
    </interactant>
    <interactant intactId="EBI-1993619">
        <id>Q14CS0</id>
        <label>UBXN2B</label>
    </interactant>
    <organismsDiffer>false</organismsDiffer>
    <experiments>6</experiments>
</comment>
<comment type="interaction">
    <interactant intactId="EBI-6509505">
        <id>Q0VD86</id>
    </interactant>
    <interactant intactId="EBI-1045061">
        <id>P61960</id>
        <label>UFM1</label>
    </interactant>
    <organismsDiffer>false</organismsDiffer>
    <experiments>3</experiments>
</comment>
<comment type="interaction">
    <interactant intactId="EBI-6509505">
        <id>Q0VD86</id>
    </interactant>
    <interactant intactId="EBI-12068150">
        <id>Q6NVU6</id>
        <label>UFSP1</label>
    </interactant>
    <organismsDiffer>false</organismsDiffer>
    <experiments>3</experiments>
</comment>
<comment type="interaction">
    <interactant intactId="EBI-6509505">
        <id>Q0VD86</id>
    </interactant>
    <interactant intactId="EBI-1043104">
        <id>Q9Y4E8</id>
        <label>USP15</label>
    </interactant>
    <organismsDiffer>false</organismsDiffer>
    <experiments>2</experiments>
</comment>
<comment type="interaction">
    <interactant intactId="EBI-6509505">
        <id>Q0VD86</id>
    </interactant>
    <interactant intactId="EBI-11980193">
        <id>Q14119</id>
        <label>VEZF1</label>
    </interactant>
    <organismsDiffer>false</organismsDiffer>
    <experiments>3</experiments>
</comment>
<comment type="interaction">
    <interactant intactId="EBI-6509505">
        <id>Q0VD86</id>
    </interactant>
    <interactant intactId="EBI-11957216">
        <id>A8MV65-2</id>
        <label>VGLL3</label>
    </interactant>
    <organismsDiffer>false</organismsDiffer>
    <experiments>3</experiments>
</comment>
<comment type="interaction">
    <interactant intactId="EBI-6509505">
        <id>Q0VD86</id>
    </interactant>
    <interactant intactId="EBI-353844">
        <id>P08670</id>
        <label>VIM</label>
    </interactant>
    <organismsDiffer>false</organismsDiffer>
    <experiments>3</experiments>
</comment>
<comment type="interaction">
    <interactant intactId="EBI-6509505">
        <id>Q0VD86</id>
    </interactant>
    <interactant intactId="EBI-7207091">
        <id>O14972</id>
        <label>VPS26C</label>
    </interactant>
    <organismsDiffer>false</organismsDiffer>
    <experiments>3</experiments>
</comment>
<comment type="interaction">
    <interactant intactId="EBI-6509505">
        <id>Q0VD86</id>
    </interactant>
    <interactant intactId="EBI-10243107">
        <id>Q548N1</id>
        <label>VPS28</label>
    </interactant>
    <organismsDiffer>false</organismsDiffer>
    <experiments>3</experiments>
</comment>
<comment type="interaction">
    <interactant intactId="EBI-6509505">
        <id>Q0VD86</id>
    </interactant>
    <interactant intactId="EBI-12040603">
        <id>Q9NZC7-5</id>
        <label>WWOX</label>
    </interactant>
    <organismsDiffer>false</organismsDiffer>
    <experiments>3</experiments>
</comment>
<comment type="interaction">
    <interactant intactId="EBI-6509505">
        <id>Q0VD86</id>
    </interactant>
    <interactant intactId="EBI-743787">
        <id>Q9GZM5</id>
        <label>YIPF3</label>
    </interactant>
    <organismsDiffer>false</organismsDiffer>
    <experiments>3</experiments>
</comment>
<comment type="interaction">
    <interactant intactId="EBI-6509505">
        <id>Q0VD86</id>
    </interactant>
    <interactant intactId="EBI-2510804">
        <id>Q5VVQ6</id>
        <label>YOD1</label>
    </interactant>
    <organismsDiffer>false</organismsDiffer>
    <experiments>3</experiments>
</comment>
<comment type="interaction">
    <interactant intactId="EBI-6509505">
        <id>Q0VD86</id>
    </interactant>
    <interactant intactId="EBI-10254561">
        <id>Q6UX98</id>
        <label>ZDHHC24</label>
    </interactant>
    <organismsDiffer>false</organismsDiffer>
    <experiments>3</experiments>
</comment>
<comment type="interaction">
    <interactant intactId="EBI-6509505">
        <id>Q0VD86</id>
    </interactant>
    <interactant intactId="EBI-725171">
        <id>Q9H8U3</id>
        <label>ZFAND3</label>
    </interactant>
    <organismsDiffer>false</organismsDiffer>
    <experiments>3</experiments>
</comment>
<comment type="interaction">
    <interactant intactId="EBI-6509505">
        <id>Q0VD86</id>
    </interactant>
    <interactant intactId="EBI-12030590">
        <id>Q9H0C1</id>
        <label>ZMYND12</label>
    </interactant>
    <organismsDiffer>false</organismsDiffer>
    <experiments>3</experiments>
</comment>
<comment type="interaction">
    <interactant intactId="EBI-6509505">
        <id>Q0VD86</id>
    </interactant>
    <interactant intactId="EBI-746595">
        <id>Q96E35</id>
        <label>ZMYND19</label>
    </interactant>
    <organismsDiffer>false</organismsDiffer>
    <experiments>3</experiments>
</comment>
<comment type="interaction">
    <interactant intactId="EBI-6509505">
        <id>Q0VD86</id>
    </interactant>
    <interactant intactId="EBI-3921553">
        <id>P17020</id>
        <label>ZNF16</label>
    </interactant>
    <organismsDiffer>false</organismsDiffer>
    <experiments>2</experiments>
</comment>
<comment type="interaction">
    <interactant intactId="EBI-6509505">
        <id>Q0VD86</id>
    </interactant>
    <interactant intactId="EBI-1965483">
        <id>P17041</id>
        <label>ZNF32</label>
    </interactant>
    <organismsDiffer>false</organismsDiffer>
    <experiments>3</experiments>
</comment>
<comment type="interaction">
    <interactant intactId="EBI-6509505">
        <id>Q0VD86</id>
    </interactant>
    <interactant intactId="EBI-740232">
        <id>Q9NWS9-2</id>
        <label>ZNF446</label>
    </interactant>
    <organismsDiffer>false</organismsDiffer>
    <experiments>3</experiments>
</comment>
<comment type="interaction">
    <interactant intactId="EBI-6509505">
        <id>Q0VD86</id>
    </interactant>
    <interactant intactId="EBI-4395497">
        <id>Q9BV97</id>
        <label>ZNF747</label>
    </interactant>
    <organismsDiffer>false</organismsDiffer>
    <experiments>3</experiments>
</comment>
<comment type="interaction">
    <interactant intactId="EBI-6509505">
        <id>Q0VD86</id>
    </interactant>
    <interactant intactId="EBI-12834294">
        <id>Q7L2R6-2</id>
        <label>ZNF765</label>
    </interactant>
    <organismsDiffer>false</organismsDiffer>
    <experiments>3</experiments>
</comment>
<comment type="interaction">
    <interactant intactId="EBI-6509505">
        <id>Q0VD86</id>
    </interactant>
    <interactant intactId="EBI-741415">
        <id>O60232</id>
        <label>ZNRD2</label>
    </interactant>
    <organismsDiffer>false</organismsDiffer>
    <experiments>3</experiments>
</comment>
<comment type="interaction">
    <interactant intactId="EBI-6509505">
        <id>Q0VD86</id>
    </interactant>
    <interactant intactId="EBI-10177989">
        <id>G4XUV3</id>
    </interactant>
    <organismsDiffer>false</organismsDiffer>
    <experiments>3</experiments>
</comment>
<comment type="subcellular location">
    <subcellularLocation>
        <location evidence="3 4">Nucleus</location>
    </subcellularLocation>
    <subcellularLocation>
        <location evidence="4">Cytoplasm</location>
    </subcellularLocation>
</comment>
<comment type="alternative products">
    <event type="alternative splicing"/>
    <isoform>
        <id>Q0VD86-1</id>
        <name>1</name>
        <sequence type="displayed"/>
    </isoform>
    <isoform>
        <id>Q0VD86-2</id>
        <name>2</name>
        <sequence type="described" ref="VSP_033235"/>
    </isoform>
</comment>
<comment type="tissue specificity">
    <text evidence="3 5">Detected in testis, and at lower levels in ovary. Detected at very low levels in testis tumors (PubMed:15159402). Down-regulated in bone marrow cells in acute myeloid and lymphoid leukemia patients as compared with normal bone marrow cells (PubMed:21540187).</text>
</comment>
<comment type="induction">
    <text evidence="5">By serum starvation.</text>
</comment>
<comment type="PTM">
    <text evidence="3">Phosphorylated when part of a complex with CCNA1 and CDK2. Strongly phosphorylated by CDK2 on its C-terminal region spanning amino acid 149-221. Less intensively phosphorylated by CDK2 on its first 75 amino acid residues.</text>
</comment>
<comment type="similarity">
    <text evidence="10">Belongs to the INCA family.</text>
</comment>
<reference key="1">
    <citation type="journal article" date="2004" name="J. Biol. Chem.">
        <title>Identification of interaction partners and substrates of the cyclin A1-CDK2 complex.</title>
        <authorList>
            <person name="Diederichs S."/>
            <person name="Baeumer N."/>
            <person name="Ji P."/>
            <person name="Metzelder S.K."/>
            <person name="Idos G.E."/>
            <person name="Cauvet T."/>
            <person name="Wang W."/>
            <person name="Moeller M."/>
            <person name="Pierschalski S."/>
            <person name="Gromoll J."/>
            <person name="Schrader M.G."/>
            <person name="Koeffler H.P."/>
            <person name="Berdel W.E."/>
            <person name="Serve H."/>
            <person name="Mueller-Tidow C."/>
        </authorList>
    </citation>
    <scope>NUCLEOTIDE SEQUENCE [MRNA] (ISOFORM 2)</scope>
    <scope>INTERACTION WITH CCNA1</scope>
    <scope>IDENTIFICATION IN A COMPLEX WITH CCNA1 AND CDK2</scope>
    <scope>PHOSPHORYLATION AT SER-23; THR-182; SER-191 AND SER-194</scope>
    <scope>MUTAGENESIS OF SER-23; THR-182; SER-191 AND SER-194</scope>
    <scope>SUBCELLULAR LOCATION</scope>
    <scope>TISSUE SPECIFICITY</scope>
    <source>
        <tissue>Testis</tissue>
    </source>
</reference>
<reference key="2">
    <citation type="submission" date="2004-04" db="EMBL/GenBank/DDBJ databases">
        <title>A new spermatogenesis-related gene.</title>
        <authorList>
            <person name="Hu T.H."/>
            <person name="Miao S.Y."/>
            <person name="Zhang X.D."/>
            <person name="Qiao Y."/>
            <person name="Liang G."/>
            <person name="Wang L.F."/>
        </authorList>
    </citation>
    <scope>NUCLEOTIDE SEQUENCE [LARGE SCALE MRNA] (ISOFORM 2)</scope>
    <source>
        <tissue>Testis</tissue>
    </source>
</reference>
<reference key="3">
    <citation type="journal article" date="2004" name="Genome Res.">
        <title>The status, quality, and expansion of the NIH full-length cDNA project: the Mammalian Gene Collection (MGC).</title>
        <authorList>
            <consortium name="The MGC Project Team"/>
        </authorList>
    </citation>
    <scope>NUCLEOTIDE SEQUENCE [LARGE SCALE MRNA] (ISOFORM 1)</scope>
</reference>
<reference key="4">
    <citation type="journal article" date="2011" name="Mol. Med. Report.">
        <title>Zinc finger protein HZF1 promotes K562 cell proliferation by interacting with and inhibiting INCA1.</title>
        <authorList>
            <person name="Li X.B."/>
            <person name="Chen J."/>
            <person name="Deng M.J."/>
            <person name="Wang F."/>
            <person name="Du Z.W."/>
            <person name="Zhang J.W."/>
        </authorList>
    </citation>
    <scope>INTERACTION WITH ZNF16</scope>
</reference>
<reference key="5">
    <citation type="journal article" date="2008" name="Biochem. Cell Biol.">
        <title>A novel testis protein, RSB-66, interacting with INCA1 (inhibitor of Cdk interacting with cyclin A1).</title>
        <authorList>
            <person name="Chen X."/>
            <person name="Hu T."/>
            <person name="Liang G."/>
            <person name="Yang M."/>
            <person name="Zong S."/>
            <person name="Miao S."/>
            <person name="Koide S.S."/>
            <person name="Wang L."/>
        </authorList>
    </citation>
    <scope>INTERACTION WITH SPACA9</scope>
    <scope>SUBCELLULAR LOCATION</scope>
</reference>
<reference key="6">
    <citation type="journal article" date="2011" name="J. Biol. Chem.">
        <title>Inhibitor of cyclin-dependent kinase (CDK) interacting with cyclin A1 (INCA1) regulates proliferation and is repressed by oncogenic signaling.</title>
        <authorList>
            <person name="Baeumer N."/>
            <person name="Tickenbrock L."/>
            <person name="Tschanter P."/>
            <person name="Lohmeyer L."/>
            <person name="Diederichs S."/>
            <person name="Baeumer S."/>
            <person name="Skryabin B.V."/>
            <person name="Zhang F."/>
            <person name="Agrawal-Singh S."/>
            <person name="Koehler G."/>
            <person name="Berdel W.E."/>
            <person name="Serve H."/>
            <person name="Koschmieder S."/>
            <person name="Mueller-Tidow C."/>
        </authorList>
    </citation>
    <scope>FUNCTION</scope>
    <scope>TISSUE SPECIFICITY</scope>
    <scope>INTERACTION WITH CCNA1; CCNA2; CCNB1 AND CCNE1</scope>
    <scope>INTERACTION WITH THE CCNA1/CDK2 COMPLEX</scope>
    <scope>INDUCTION</scope>
</reference>
<reference key="7">
    <citation type="journal article" date="2011" name="PLoS ONE">
        <title>The inhibitor of growth protein 5 (ING5) depends on INCA1 as a co-factor for its antiproliferative effects.</title>
        <authorList>
            <person name="Zhang F."/>
            <person name="Baeumer N."/>
            <person name="Rode M."/>
            <person name="Ji P."/>
            <person name="Zhang T."/>
            <person name="Berdel W.E."/>
            <person name="Mueller-Tidow C."/>
        </authorList>
    </citation>
    <scope>INTERACTION WITH ING5; DAZAP2; RNF26; USP15; SPOUT1; DPH7; TRIM26 AND RAB5C</scope>
</reference>
<keyword id="KW-0025">Alternative splicing</keyword>
<keyword id="KW-0963">Cytoplasm</keyword>
<keyword id="KW-0539">Nucleus</keyword>
<keyword id="KW-0597">Phosphoprotein</keyword>
<keyword id="KW-0649">Protein kinase inhibitor</keyword>
<keyword id="KW-1185">Reference proteome</keyword>
<name>INCA1_HUMAN</name>
<dbReference type="EMBL" id="AY601906">
    <property type="protein sequence ID" value="AAT09152.1"/>
    <property type="molecule type" value="mRNA"/>
</dbReference>
<dbReference type="EMBL" id="AY601907">
    <property type="protein sequence ID" value="AAT09153.1"/>
    <property type="molecule type" value="mRNA"/>
</dbReference>
<dbReference type="EMBL" id="AY604176">
    <property type="protein sequence ID" value="AAT36739.1"/>
    <property type="molecule type" value="mRNA"/>
</dbReference>
<dbReference type="EMBL" id="BC119781">
    <property type="protein sequence ID" value="AAI19782.1"/>
    <property type="molecule type" value="mRNA"/>
</dbReference>
<dbReference type="EMBL" id="BC122873">
    <property type="protein sequence ID" value="AAI22874.1"/>
    <property type="molecule type" value="mRNA"/>
</dbReference>
<dbReference type="CCDS" id="CCDS11064.1">
    <molecule id="Q0VD86-2"/>
</dbReference>
<dbReference type="CCDS" id="CCDS54074.1">
    <molecule id="Q0VD86-1"/>
</dbReference>
<dbReference type="RefSeq" id="NP_001161457.1">
    <molecule id="Q0VD86-2"/>
    <property type="nucleotide sequence ID" value="NM_001167985.2"/>
</dbReference>
<dbReference type="RefSeq" id="NP_001161458.1">
    <molecule id="Q0VD86-1"/>
    <property type="nucleotide sequence ID" value="NM_001167986.2"/>
</dbReference>
<dbReference type="RefSeq" id="NP_001161459.1">
    <molecule id="Q0VD86-1"/>
    <property type="nucleotide sequence ID" value="NM_001167987.2"/>
</dbReference>
<dbReference type="RefSeq" id="NP_001381717.1">
    <molecule id="Q0VD86-1"/>
    <property type="nucleotide sequence ID" value="NM_001394788.1"/>
</dbReference>
<dbReference type="RefSeq" id="NP_001381718.1">
    <molecule id="Q0VD86-1"/>
    <property type="nucleotide sequence ID" value="NM_001394789.1"/>
</dbReference>
<dbReference type="RefSeq" id="NP_001381719.1">
    <molecule id="Q0VD86-2"/>
    <property type="nucleotide sequence ID" value="NM_001394790.1"/>
</dbReference>
<dbReference type="RefSeq" id="NP_001381720.1">
    <molecule id="Q0VD86-2"/>
    <property type="nucleotide sequence ID" value="NM_001394791.1"/>
</dbReference>
<dbReference type="RefSeq" id="NP_998891.2">
    <molecule id="Q0VD86-2"/>
    <property type="nucleotide sequence ID" value="NM_213726.3"/>
</dbReference>
<dbReference type="RefSeq" id="XP_005256684.1">
    <property type="nucleotide sequence ID" value="XM_005256627.3"/>
</dbReference>
<dbReference type="RefSeq" id="XP_005256685.1">
    <molecule id="Q0VD86-1"/>
    <property type="nucleotide sequence ID" value="XM_005256628.6"/>
</dbReference>
<dbReference type="RefSeq" id="XP_005256686.1">
    <property type="nucleotide sequence ID" value="XM_005256629.1"/>
</dbReference>
<dbReference type="RefSeq" id="XP_006721580.1">
    <property type="nucleotide sequence ID" value="XM_006721517.1"/>
</dbReference>
<dbReference type="RefSeq" id="XP_006721581.1">
    <property type="nucleotide sequence ID" value="XM_006721518.2"/>
</dbReference>
<dbReference type="RefSeq" id="XP_006721582.1">
    <property type="nucleotide sequence ID" value="XM_006721519.3"/>
</dbReference>
<dbReference type="RefSeq" id="XP_011522134.1">
    <property type="nucleotide sequence ID" value="XM_011523832.2"/>
</dbReference>
<dbReference type="BioGRID" id="132642">
    <property type="interactions" value="241"/>
</dbReference>
<dbReference type="ELM" id="Q0VD86"/>
<dbReference type="FunCoup" id="Q0VD86">
    <property type="interactions" value="849"/>
</dbReference>
<dbReference type="IntAct" id="Q0VD86">
    <property type="interactions" value="254"/>
</dbReference>
<dbReference type="MINT" id="Q0VD86"/>
<dbReference type="STRING" id="9606.ENSP00000458316"/>
<dbReference type="GlyGen" id="Q0VD86">
    <property type="glycosylation" value="1 site, 1 O-linked glycan (1 site)"/>
</dbReference>
<dbReference type="iPTMnet" id="Q0VD86"/>
<dbReference type="PhosphoSitePlus" id="Q0VD86"/>
<dbReference type="BioMuta" id="INCA1"/>
<dbReference type="DMDM" id="121940471"/>
<dbReference type="MassIVE" id="Q0VD86"/>
<dbReference type="PaxDb" id="9606-ENSP00000458316"/>
<dbReference type="Antibodypedia" id="51738">
    <property type="antibodies" value="131 antibodies from 21 providers"/>
</dbReference>
<dbReference type="DNASU" id="388324"/>
<dbReference type="Ensembl" id="ENST00000355025.7">
    <molecule id="Q0VD86-2"/>
    <property type="protein sequence ID" value="ENSP00000347129.3"/>
    <property type="gene ID" value="ENSG00000196388.9"/>
</dbReference>
<dbReference type="Ensembl" id="ENST00000574617.1">
    <molecule id="Q0VD86-1"/>
    <property type="protein sequence ID" value="ENSP00000458316.1"/>
    <property type="gene ID" value="ENSG00000196388.9"/>
</dbReference>
<dbReference type="Ensembl" id="ENST00000575780.5">
    <molecule id="Q0VD86-2"/>
    <property type="protein sequence ID" value="ENSP00000461844.1"/>
    <property type="gene ID" value="ENSG00000196388.9"/>
</dbReference>
<dbReference type="Ensembl" id="ENST00000576820.5">
    <molecule id="Q0VD86-1"/>
    <property type="protein sequence ID" value="ENSP00000460673.1"/>
    <property type="gene ID" value="ENSG00000196388.9"/>
</dbReference>
<dbReference type="Ensembl" id="ENST00000695324.1">
    <molecule id="Q0VD86-1"/>
    <property type="protein sequence ID" value="ENSP00000511805.1"/>
    <property type="gene ID" value="ENSG00000196388.9"/>
</dbReference>
<dbReference type="GeneID" id="388324"/>
<dbReference type="KEGG" id="hsa:388324"/>
<dbReference type="MANE-Select" id="ENST00000695324.1">
    <property type="protein sequence ID" value="ENSP00000511805.1"/>
    <property type="RefSeq nucleotide sequence ID" value="NM_001394789.1"/>
    <property type="RefSeq protein sequence ID" value="NP_001381718.1"/>
</dbReference>
<dbReference type="UCSC" id="uc002gal.3">
    <molecule id="Q0VD86-1"/>
    <property type="organism name" value="human"/>
</dbReference>
<dbReference type="AGR" id="HGNC:32224"/>
<dbReference type="CTD" id="388324"/>
<dbReference type="DisGeNET" id="388324"/>
<dbReference type="GeneCards" id="INCA1"/>
<dbReference type="HGNC" id="HGNC:32224">
    <property type="gene designation" value="INCA1"/>
</dbReference>
<dbReference type="HPA" id="ENSG00000196388">
    <property type="expression patterns" value="Tissue enriched (testis)"/>
</dbReference>
<dbReference type="MIM" id="617374">
    <property type="type" value="gene"/>
</dbReference>
<dbReference type="neXtProt" id="NX_Q0VD86"/>
<dbReference type="OpenTargets" id="ENSG00000196388"/>
<dbReference type="PharmGKB" id="PA165431930"/>
<dbReference type="VEuPathDB" id="HostDB:ENSG00000196388"/>
<dbReference type="eggNOG" id="ENOG502SX61">
    <property type="taxonomic scope" value="Eukaryota"/>
</dbReference>
<dbReference type="GeneTree" id="ENSGT00390000000242"/>
<dbReference type="HOGENOM" id="CLU_103802_0_0_1"/>
<dbReference type="InParanoid" id="Q0VD86"/>
<dbReference type="OMA" id="WGMELES"/>
<dbReference type="OrthoDB" id="9833817at2759"/>
<dbReference type="PAN-GO" id="Q0VD86">
    <property type="GO annotations" value="5 GO annotations based on evolutionary models"/>
</dbReference>
<dbReference type="PhylomeDB" id="Q0VD86"/>
<dbReference type="TreeFam" id="TF343431"/>
<dbReference type="PathwayCommons" id="Q0VD86"/>
<dbReference type="SignaLink" id="Q0VD86"/>
<dbReference type="SIGNOR" id="Q0VD86"/>
<dbReference type="BioGRID-ORCS" id="388324">
    <property type="hits" value="13 hits in 1150 CRISPR screens"/>
</dbReference>
<dbReference type="ChiTaRS" id="INCA1">
    <property type="organism name" value="human"/>
</dbReference>
<dbReference type="GenomeRNAi" id="388324"/>
<dbReference type="Pharos" id="Q0VD86">
    <property type="development level" value="Tbio"/>
</dbReference>
<dbReference type="PRO" id="PR:Q0VD86"/>
<dbReference type="Proteomes" id="UP000005640">
    <property type="component" value="Chromosome 17"/>
</dbReference>
<dbReference type="RNAct" id="Q0VD86">
    <property type="molecule type" value="protein"/>
</dbReference>
<dbReference type="Bgee" id="ENSG00000196388">
    <property type="expression patterns" value="Expressed in right testis and 98 other cell types or tissues"/>
</dbReference>
<dbReference type="GO" id="GO:0005737">
    <property type="term" value="C:cytoplasm"/>
    <property type="evidence" value="ECO:0000314"/>
    <property type="project" value="UniProtKB"/>
</dbReference>
<dbReference type="GO" id="GO:0016604">
    <property type="term" value="C:nuclear body"/>
    <property type="evidence" value="ECO:0000314"/>
    <property type="project" value="HPA"/>
</dbReference>
<dbReference type="GO" id="GO:0005654">
    <property type="term" value="C:nucleoplasm"/>
    <property type="evidence" value="ECO:0000314"/>
    <property type="project" value="HPA"/>
</dbReference>
<dbReference type="GO" id="GO:0005634">
    <property type="term" value="C:nucleus"/>
    <property type="evidence" value="ECO:0000314"/>
    <property type="project" value="UniProtKB"/>
</dbReference>
<dbReference type="GO" id="GO:0030332">
    <property type="term" value="F:cyclin binding"/>
    <property type="evidence" value="ECO:0000314"/>
    <property type="project" value="MGI"/>
</dbReference>
<dbReference type="GO" id="GO:0004861">
    <property type="term" value="F:cyclin-dependent protein serine/threonine kinase inhibitor activity"/>
    <property type="evidence" value="ECO:0000314"/>
    <property type="project" value="MGI"/>
</dbReference>
<dbReference type="GO" id="GO:0042802">
    <property type="term" value="F:identical protein binding"/>
    <property type="evidence" value="ECO:0000353"/>
    <property type="project" value="IntAct"/>
</dbReference>
<dbReference type="GO" id="GO:0044877">
    <property type="term" value="F:protein-containing complex binding"/>
    <property type="evidence" value="ECO:0000353"/>
    <property type="project" value="UniProtKB"/>
</dbReference>
<dbReference type="GO" id="GO:0097190">
    <property type="term" value="P:apoptotic signaling pathway"/>
    <property type="evidence" value="ECO:0000318"/>
    <property type="project" value="GO_Central"/>
</dbReference>
<dbReference type="GO" id="GO:0048144">
    <property type="term" value="P:fibroblast proliferation"/>
    <property type="evidence" value="ECO:0007669"/>
    <property type="project" value="Ensembl"/>
</dbReference>
<dbReference type="GO" id="GO:0008285">
    <property type="term" value="P:negative regulation of cell population proliferation"/>
    <property type="evidence" value="ECO:0000318"/>
    <property type="project" value="GO_Central"/>
</dbReference>
<dbReference type="GO" id="GO:0045736">
    <property type="term" value="P:negative regulation of cyclin-dependent protein serine/threonine kinase activity"/>
    <property type="evidence" value="ECO:0000314"/>
    <property type="project" value="MGI"/>
</dbReference>
<dbReference type="GO" id="GO:0048147">
    <property type="term" value="P:negative regulation of fibroblast proliferation"/>
    <property type="evidence" value="ECO:0007669"/>
    <property type="project" value="Ensembl"/>
</dbReference>
<dbReference type="GO" id="GO:2001235">
    <property type="term" value="P:positive regulation of apoptotic signaling pathway"/>
    <property type="evidence" value="ECO:0007669"/>
    <property type="project" value="Ensembl"/>
</dbReference>
<dbReference type="InterPro" id="IPR026238">
    <property type="entry name" value="INCA1"/>
</dbReference>
<dbReference type="PANTHER" id="PTHR37341">
    <property type="entry name" value="PROTEIN INCA1"/>
    <property type="match status" value="1"/>
</dbReference>
<dbReference type="PANTHER" id="PTHR37341:SF1">
    <property type="entry name" value="PROTEIN INCA1"/>
    <property type="match status" value="1"/>
</dbReference>
<dbReference type="Pfam" id="PF15142">
    <property type="entry name" value="INCA1"/>
    <property type="match status" value="1"/>
</dbReference>
<dbReference type="PRINTS" id="PR02102">
    <property type="entry name" value="PROTEININCA1"/>
</dbReference>
<accession>Q0VD86</accession>
<accession>Q6J273</accession>
<accession>Q6PKN9</accession>
<feature type="chain" id="PRO_0000331513" description="Protein INCA1">
    <location>
        <begin position="1"/>
        <end position="236"/>
    </location>
</feature>
<feature type="region of interest" description="Interaction with CCNA1 and CCNA1/CDK2 complex; essential for CDK2 inhibitory activity" evidence="5">
    <location>
        <begin position="75"/>
        <end position="99"/>
    </location>
</feature>
<feature type="short sequence motif" description="Nuclear localization signal" evidence="2">
    <location>
        <begin position="90"/>
        <end position="95"/>
    </location>
</feature>
<feature type="modified residue" description="Phosphoserine" evidence="3">
    <location>
        <position position="23"/>
    </location>
</feature>
<feature type="modified residue" description="Phosphothreonine" evidence="3">
    <location>
        <position position="182"/>
    </location>
</feature>
<feature type="modified residue" description="Phosphoserine" evidence="3">
    <location>
        <position position="191"/>
    </location>
</feature>
<feature type="modified residue" description="Phosphoserine" evidence="11">
    <location>
        <position position="194"/>
    </location>
</feature>
<feature type="splice variant" id="VSP_033235" description="In isoform 2." evidence="8 9">
    <location>
        <begin position="67"/>
        <end position="81"/>
    </location>
</feature>
<feature type="mutagenesis site" description="Loss of phosphorylation site." evidence="3">
    <original>S</original>
    <variation>A</variation>
    <location>
        <position position="23"/>
    </location>
</feature>
<feature type="mutagenesis site" description="Reduced phosphorylation. Phosphorylation is almost abolished; when associated with A-191." evidence="3">
    <original>T</original>
    <variation>A</variation>
    <location>
        <position position="182"/>
    </location>
</feature>
<feature type="mutagenesis site" description="Strongly reduced phosphorylation. Phosphorylation is almost abolished; when associated with A-182." evidence="3">
    <original>S</original>
    <variation>A</variation>
    <location>
        <position position="191"/>
    </location>
</feature>
<feature type="mutagenesis site" description="Reduced phosphorylation." evidence="3">
    <original>S</original>
    <variation>A</variation>
    <location>
        <position position="194"/>
    </location>
</feature>
<feature type="sequence conflict" description="In Ref. 1; AAT09152/AAT09153." evidence="10" ref="1">
    <original>E</original>
    <variation>D</variation>
    <location>
        <position position="153"/>
    </location>
</feature>
<protein>
    <recommendedName>
        <fullName>Protein INCA1</fullName>
    </recommendedName>
    <alternativeName>
        <fullName>Inhibitor of CDK interacting with cyclin A1</fullName>
    </alternativeName>
</protein>
<evidence type="ECO:0000250" key="1">
    <source>
        <dbReference type="UniProtKB" id="Q6PKN7"/>
    </source>
</evidence>
<evidence type="ECO:0000255" key="2"/>
<evidence type="ECO:0000269" key="3">
    <source>
    </source>
</evidence>
<evidence type="ECO:0000269" key="4">
    <source>
    </source>
</evidence>
<evidence type="ECO:0000269" key="5">
    <source>
    </source>
</evidence>
<evidence type="ECO:0000269" key="6">
    <source>
    </source>
</evidence>
<evidence type="ECO:0000269" key="7">
    <source>
    </source>
</evidence>
<evidence type="ECO:0000303" key="8">
    <source>
    </source>
</evidence>
<evidence type="ECO:0000303" key="9">
    <source ref="2"/>
</evidence>
<evidence type="ECO:0000305" key="10"/>
<evidence type="ECO:0000305" key="11">
    <source>
    </source>
</evidence>
<proteinExistence type="evidence at protein level"/>
<gene>
    <name type="primary">INCA1</name>
    <name type="ORF">HSD45</name>
</gene>
<sequence length="236" mass="26817">MQVQDDGVNLIPFAKCSRVVSRSPPPRLPSQSLRPMPQRYGDVFWKNLNQRPTPTWLEEQHIPPMLRATGCSQLGLYPPEQLPPPEMLWRRKKRRPCLEGMQQQGLGGVPARVRAVTYHLEDLRRRQSIINELKKAQWGSSGAASEPVVLGEEGCGFPSTNEYPDLEEERATYPQEEDRFLTPGRAQLLWSPWSPLDQEEACASRQLHSLASFSTVTARRNPLHNPWGMELAASEE</sequence>
<organism>
    <name type="scientific">Homo sapiens</name>
    <name type="common">Human</name>
    <dbReference type="NCBI Taxonomy" id="9606"/>
    <lineage>
        <taxon>Eukaryota</taxon>
        <taxon>Metazoa</taxon>
        <taxon>Chordata</taxon>
        <taxon>Craniata</taxon>
        <taxon>Vertebrata</taxon>
        <taxon>Euteleostomi</taxon>
        <taxon>Mammalia</taxon>
        <taxon>Eutheria</taxon>
        <taxon>Euarchontoglires</taxon>
        <taxon>Primates</taxon>
        <taxon>Haplorrhini</taxon>
        <taxon>Catarrhini</taxon>
        <taxon>Hominidae</taxon>
        <taxon>Homo</taxon>
    </lineage>
</organism>